<dbReference type="EMBL" id="AF077301">
    <property type="protein sequence ID" value="AAC68653.1"/>
    <property type="molecule type" value="mRNA"/>
</dbReference>
<dbReference type="EMBL" id="AF139131">
    <property type="protein sequence ID" value="AAD27650.1"/>
    <property type="molecule type" value="mRNA"/>
</dbReference>
<dbReference type="EMBL" id="AK312651">
    <property type="protein sequence ID" value="BAG35534.1"/>
    <property type="molecule type" value="mRNA"/>
</dbReference>
<dbReference type="EMBL" id="BC010276">
    <property type="protein sequence ID" value="AAH10276.1"/>
    <property type="molecule type" value="mRNA"/>
</dbReference>
<dbReference type="EMBL" id="L38932">
    <property type="protein sequence ID" value="AAB59573.1"/>
    <property type="molecule type" value="mRNA"/>
</dbReference>
<dbReference type="CCDS" id="CCDS11441.1"/>
<dbReference type="PIR" id="I54209">
    <property type="entry name" value="I54209"/>
</dbReference>
<dbReference type="RefSeq" id="NP_001300927.1">
    <property type="nucleotide sequence ID" value="NM_001313998.2"/>
</dbReference>
<dbReference type="RefSeq" id="NP_001300928.1">
    <property type="nucleotide sequence ID" value="NM_001313999.1"/>
</dbReference>
<dbReference type="RefSeq" id="NP_001300929.1">
    <property type="nucleotide sequence ID" value="NM_001314000.1"/>
</dbReference>
<dbReference type="RefSeq" id="NP_003757.1">
    <property type="nucleotide sequence ID" value="NM_003766.5"/>
</dbReference>
<dbReference type="RefSeq" id="XP_054173628.1">
    <property type="nucleotide sequence ID" value="XM_054317653.1"/>
</dbReference>
<dbReference type="RefSeq" id="XP_054173629.1">
    <property type="nucleotide sequence ID" value="XM_054317654.1"/>
</dbReference>
<dbReference type="PDB" id="2P1L">
    <property type="method" value="X-ray"/>
    <property type="resolution" value="2.50 A"/>
    <property type="chains" value="B/D/F/H=107-135"/>
</dbReference>
<dbReference type="PDB" id="2PON">
    <property type="method" value="NMR"/>
    <property type="chains" value="A=106-128"/>
</dbReference>
<dbReference type="PDB" id="3DVU">
    <property type="method" value="X-ray"/>
    <property type="resolution" value="2.50 A"/>
    <property type="chains" value="C/D=105-130"/>
</dbReference>
<dbReference type="PDB" id="4DDP">
    <property type="method" value="X-ray"/>
    <property type="resolution" value="1.55 A"/>
    <property type="chains" value="A=241-450"/>
</dbReference>
<dbReference type="PDB" id="4MI8">
    <property type="method" value="X-ray"/>
    <property type="resolution" value="2.10 A"/>
    <property type="chains" value="C/D=107-130"/>
</dbReference>
<dbReference type="PDB" id="5EFM">
    <property type="method" value="X-ray"/>
    <property type="resolution" value="1.95 A"/>
    <property type="chains" value="A=141-171"/>
</dbReference>
<dbReference type="PDB" id="5HHE">
    <property type="method" value="X-ray"/>
    <property type="resolution" value="1.46 A"/>
    <property type="chains" value="A/D=175-265"/>
</dbReference>
<dbReference type="PDB" id="5VAU">
    <property type="method" value="X-ray"/>
    <property type="resolution" value="1.75 A"/>
    <property type="chains" value="E/F/G/H=105-130"/>
</dbReference>
<dbReference type="PDB" id="5VAX">
    <property type="method" value="X-ray"/>
    <property type="resolution" value="2.00 A"/>
    <property type="chains" value="E/F/G/H=105-130"/>
</dbReference>
<dbReference type="PDB" id="5VAY">
    <property type="method" value="X-ray"/>
    <property type="resolution" value="1.80 A"/>
    <property type="chains" value="E/F/G/H=105-130"/>
</dbReference>
<dbReference type="PDB" id="6DCN">
    <property type="method" value="X-ray"/>
    <property type="resolution" value="2.44 A"/>
    <property type="chains" value="C/D=105-130"/>
</dbReference>
<dbReference type="PDB" id="6DCO">
    <property type="method" value="X-ray"/>
    <property type="resolution" value="2.20 A"/>
    <property type="chains" value="C/D=105-130"/>
</dbReference>
<dbReference type="PDB" id="6HOI">
    <property type="method" value="X-ray"/>
    <property type="resolution" value="1.14 A"/>
    <property type="chains" value="F/G=93-102"/>
</dbReference>
<dbReference type="PDB" id="6HOJ">
    <property type="method" value="X-ray"/>
    <property type="resolution" value="1.51 A"/>
    <property type="chains" value="A/B/C=93-105"/>
</dbReference>
<dbReference type="PDB" id="6HOK">
    <property type="method" value="X-ray"/>
    <property type="resolution" value="1.61 A"/>
    <property type="chains" value="A=93-105"/>
</dbReference>
<dbReference type="PDB" id="7BL1">
    <property type="method" value="EM"/>
    <property type="resolution" value="9.80 A"/>
    <property type="chains" value="EEE=1-450"/>
</dbReference>
<dbReference type="PDB" id="8SOR">
    <property type="method" value="EM"/>
    <property type="resolution" value="3.96 A"/>
    <property type="chains" value="D=1-450"/>
</dbReference>
<dbReference type="PDB" id="9C82">
    <property type="method" value="EM"/>
    <property type="resolution" value="6.84 A"/>
    <property type="chains" value="D=1-450"/>
</dbReference>
<dbReference type="PDB" id="9MHF">
    <property type="method" value="EM"/>
    <property type="resolution" value="2.73 A"/>
    <property type="chains" value="D=1-450"/>
</dbReference>
<dbReference type="PDB" id="9MHG">
    <property type="method" value="EM"/>
    <property type="resolution" value="3.20 A"/>
    <property type="chains" value="D=1-450"/>
</dbReference>
<dbReference type="PDB" id="9MHH">
    <property type="method" value="EM"/>
    <property type="resolution" value="4.50 A"/>
    <property type="chains" value="D=1-450"/>
</dbReference>
<dbReference type="PDBsum" id="2P1L"/>
<dbReference type="PDBsum" id="2PON"/>
<dbReference type="PDBsum" id="3DVU"/>
<dbReference type="PDBsum" id="4DDP"/>
<dbReference type="PDBsum" id="4MI8"/>
<dbReference type="PDBsum" id="5EFM"/>
<dbReference type="PDBsum" id="5HHE"/>
<dbReference type="PDBsum" id="5VAU"/>
<dbReference type="PDBsum" id="5VAX"/>
<dbReference type="PDBsum" id="5VAY"/>
<dbReference type="PDBsum" id="6DCN"/>
<dbReference type="PDBsum" id="6DCO"/>
<dbReference type="PDBsum" id="6HOI"/>
<dbReference type="PDBsum" id="6HOJ"/>
<dbReference type="PDBsum" id="6HOK"/>
<dbReference type="PDBsum" id="7BL1"/>
<dbReference type="PDBsum" id="8SOR"/>
<dbReference type="PDBsum" id="9C82"/>
<dbReference type="PDBsum" id="9MHF"/>
<dbReference type="PDBsum" id="9MHG"/>
<dbReference type="PDBsum" id="9MHH"/>
<dbReference type="EMDB" id="EMD-12214"/>
<dbReference type="EMDB" id="EMD-12237"/>
<dbReference type="EMDB" id="EMD-12238"/>
<dbReference type="EMDB" id="EMD-2846"/>
<dbReference type="EMDB" id="EMD-40669"/>
<dbReference type="EMDB" id="EMD-40738"/>
<dbReference type="EMDB" id="EMD-45297"/>
<dbReference type="EMDB" id="EMD-48276"/>
<dbReference type="EMDB" id="EMD-48277"/>
<dbReference type="EMDB" id="EMD-48278"/>
<dbReference type="SASBDB" id="Q14457"/>
<dbReference type="SMR" id="Q14457"/>
<dbReference type="BioGRID" id="114226">
    <property type="interactions" value="216"/>
</dbReference>
<dbReference type="ComplexPortal" id="CPX-73">
    <property type="entry name" value="Phosphatidylinositol 3-kinase complex, class III, ATG14 variant"/>
</dbReference>
<dbReference type="ComplexPortal" id="CPX-74">
    <property type="entry name" value="Phosphatidylinositol 3-kinase complex, class III, UVRAG variant"/>
</dbReference>
<dbReference type="CORUM" id="Q14457"/>
<dbReference type="DIP" id="DIP-44611N"/>
<dbReference type="ELM" id="Q14457"/>
<dbReference type="FunCoup" id="Q14457">
    <property type="interactions" value="3491"/>
</dbReference>
<dbReference type="IntAct" id="Q14457">
    <property type="interactions" value="177"/>
</dbReference>
<dbReference type="MINT" id="Q14457"/>
<dbReference type="STRING" id="9606.ENSP00000355231"/>
<dbReference type="BindingDB" id="Q14457"/>
<dbReference type="ChEMBL" id="CHEMBL4296010"/>
<dbReference type="DrugBank" id="DB00783">
    <property type="generic name" value="Estradiol"/>
</dbReference>
<dbReference type="DrugBank" id="DB13952">
    <property type="generic name" value="Estradiol acetate"/>
</dbReference>
<dbReference type="DrugBank" id="DB13953">
    <property type="generic name" value="Estradiol benzoate"/>
</dbReference>
<dbReference type="DrugBank" id="DB13954">
    <property type="generic name" value="Estradiol cypionate"/>
</dbReference>
<dbReference type="DrugBank" id="DB13955">
    <property type="generic name" value="Estradiol dienanthate"/>
</dbReference>
<dbReference type="DrugBank" id="DB13956">
    <property type="generic name" value="Estradiol valerate"/>
</dbReference>
<dbReference type="MoonDB" id="Q14457">
    <property type="type" value="Predicted"/>
</dbReference>
<dbReference type="TCDB" id="9.A.15.2.1">
    <property type="family name" value="the autophagy-related phagophore-formation transporter (apt) family"/>
</dbReference>
<dbReference type="GlyGen" id="Q14457">
    <property type="glycosylation" value="7 sites, 1 O-linked glycan (1 site)"/>
</dbReference>
<dbReference type="iPTMnet" id="Q14457"/>
<dbReference type="PhosphoSitePlus" id="Q14457"/>
<dbReference type="SwissPalm" id="Q14457"/>
<dbReference type="BioMuta" id="BECN1"/>
<dbReference type="DMDM" id="13124704"/>
<dbReference type="jPOST" id="Q14457"/>
<dbReference type="MassIVE" id="Q14457"/>
<dbReference type="PaxDb" id="9606-ENSP00000355231"/>
<dbReference type="PeptideAtlas" id="Q14457"/>
<dbReference type="ProteomicsDB" id="59999"/>
<dbReference type="Pumba" id="Q14457"/>
<dbReference type="Antibodypedia" id="4116">
    <property type="antibodies" value="1614 antibodies from 48 providers"/>
</dbReference>
<dbReference type="DNASU" id="8678"/>
<dbReference type="Ensembl" id="ENST00000361523.8">
    <property type="protein sequence ID" value="ENSP00000355231.3"/>
    <property type="gene ID" value="ENSG00000126581.13"/>
</dbReference>
<dbReference type="Ensembl" id="ENST00000590099.6">
    <property type="protein sequence ID" value="ENSP00000465364.1"/>
    <property type="gene ID" value="ENSG00000126581.13"/>
</dbReference>
<dbReference type="GeneID" id="8678"/>
<dbReference type="KEGG" id="hsa:8678"/>
<dbReference type="MANE-Select" id="ENST00000590099.6">
    <property type="protein sequence ID" value="ENSP00000465364.1"/>
    <property type="RefSeq nucleotide sequence ID" value="NM_001313998.2"/>
    <property type="RefSeq protein sequence ID" value="NP_001300927.1"/>
</dbReference>
<dbReference type="UCSC" id="uc002ibn.3">
    <property type="organism name" value="human"/>
</dbReference>
<dbReference type="AGR" id="HGNC:1034"/>
<dbReference type="CTD" id="8678"/>
<dbReference type="DisGeNET" id="8678"/>
<dbReference type="GeneCards" id="BECN1"/>
<dbReference type="HGNC" id="HGNC:1034">
    <property type="gene designation" value="BECN1"/>
</dbReference>
<dbReference type="HPA" id="ENSG00000126581">
    <property type="expression patterns" value="Low tissue specificity"/>
</dbReference>
<dbReference type="MIM" id="604378">
    <property type="type" value="gene"/>
</dbReference>
<dbReference type="neXtProt" id="NX_Q14457"/>
<dbReference type="OpenTargets" id="ENSG00000126581"/>
<dbReference type="PharmGKB" id="PA25337"/>
<dbReference type="VEuPathDB" id="HostDB:ENSG00000126581"/>
<dbReference type="eggNOG" id="KOG2751">
    <property type="taxonomic scope" value="Eukaryota"/>
</dbReference>
<dbReference type="GeneTree" id="ENSGT00390000008164"/>
<dbReference type="HOGENOM" id="CLU_024219_4_1_1"/>
<dbReference type="InParanoid" id="Q14457"/>
<dbReference type="OMA" id="EWDVYKA"/>
<dbReference type="OrthoDB" id="20368at2759"/>
<dbReference type="PAN-GO" id="Q14457">
    <property type="GO annotations" value="6 GO annotations based on evolutionary models"/>
</dbReference>
<dbReference type="PhylomeDB" id="Q14457"/>
<dbReference type="TreeFam" id="TF314282"/>
<dbReference type="PathwayCommons" id="Q14457"/>
<dbReference type="Reactome" id="R-HSA-1169408">
    <property type="pathway name" value="ISG15 antiviral mechanism"/>
</dbReference>
<dbReference type="Reactome" id="R-HSA-1632852">
    <property type="pathway name" value="Macroautophagy"/>
</dbReference>
<dbReference type="Reactome" id="R-HSA-5689880">
    <property type="pathway name" value="Ub-specific processing proteases"/>
</dbReference>
<dbReference type="Reactome" id="R-HSA-9679504">
    <property type="pathway name" value="Translation of Replicase and Assembly of the Replication Transcription Complex"/>
</dbReference>
<dbReference type="Reactome" id="R-HSA-9694676">
    <property type="pathway name" value="Translation of Replicase and Assembly of the Replication Transcription Complex"/>
</dbReference>
<dbReference type="Reactome" id="R-HSA-9705671">
    <property type="pathway name" value="SARS-CoV-2 activates/modulates innate and adaptive immune responses"/>
</dbReference>
<dbReference type="Reactome" id="R-HSA-983170">
    <property type="pathway name" value="Antigen Presentation: Folding, assembly and peptide loading of class I MHC"/>
</dbReference>
<dbReference type="Reactome" id="R-HSA-9833110">
    <property type="pathway name" value="RSV-host interactions"/>
</dbReference>
<dbReference type="SignaLink" id="Q14457"/>
<dbReference type="SIGNOR" id="Q14457"/>
<dbReference type="BioGRID-ORCS" id="8678">
    <property type="hits" value="88 hits in 1172 CRISPR screens"/>
</dbReference>
<dbReference type="ChiTaRS" id="BECN1">
    <property type="organism name" value="human"/>
</dbReference>
<dbReference type="EvolutionaryTrace" id="Q14457"/>
<dbReference type="GeneWiki" id="BECN1"/>
<dbReference type="GenomeRNAi" id="8678"/>
<dbReference type="Pharos" id="Q14457">
    <property type="development level" value="Tbio"/>
</dbReference>
<dbReference type="PRO" id="PR:Q14457"/>
<dbReference type="Proteomes" id="UP000005640">
    <property type="component" value="Chromosome 17"/>
</dbReference>
<dbReference type="RNAct" id="Q14457">
    <property type="molecule type" value="protein"/>
</dbReference>
<dbReference type="Bgee" id="ENSG00000126581">
    <property type="expression patterns" value="Expressed in rectum and 208 other cell types or tissues"/>
</dbReference>
<dbReference type="ExpressionAtlas" id="Q14457">
    <property type="expression patterns" value="baseline and differential"/>
</dbReference>
<dbReference type="GO" id="GO:0005776">
    <property type="term" value="C:autophagosome"/>
    <property type="evidence" value="ECO:0000250"/>
    <property type="project" value="UniProt"/>
</dbReference>
<dbReference type="GO" id="GO:0005737">
    <property type="term" value="C:cytoplasm"/>
    <property type="evidence" value="ECO:0000314"/>
    <property type="project" value="UniProtKB"/>
</dbReference>
<dbReference type="GO" id="GO:0032473">
    <property type="term" value="C:cytoplasmic side of mitochondrial outer membrane"/>
    <property type="evidence" value="ECO:0000314"/>
    <property type="project" value="ParkinsonsUK-UCL"/>
</dbReference>
<dbReference type="GO" id="GO:0005829">
    <property type="term" value="C:cytosol"/>
    <property type="evidence" value="ECO:0000314"/>
    <property type="project" value="HPA"/>
</dbReference>
<dbReference type="GO" id="GO:0030425">
    <property type="term" value="C:dendrite"/>
    <property type="evidence" value="ECO:0007669"/>
    <property type="project" value="Ensembl"/>
</dbReference>
<dbReference type="GO" id="GO:0005783">
    <property type="term" value="C:endoplasmic reticulum"/>
    <property type="evidence" value="ECO:0000314"/>
    <property type="project" value="ParkinsonsUK-UCL"/>
</dbReference>
<dbReference type="GO" id="GO:0005789">
    <property type="term" value="C:endoplasmic reticulum membrane"/>
    <property type="evidence" value="ECO:0007669"/>
    <property type="project" value="UniProtKB-SubCell"/>
</dbReference>
<dbReference type="GO" id="GO:0005768">
    <property type="term" value="C:endosome"/>
    <property type="evidence" value="ECO:0000314"/>
    <property type="project" value="ParkinsonsUK-UCL"/>
</dbReference>
<dbReference type="GO" id="GO:0010008">
    <property type="term" value="C:endosome membrane"/>
    <property type="evidence" value="ECO:0007669"/>
    <property type="project" value="UniProtKB-SubCell"/>
</dbReference>
<dbReference type="GO" id="GO:0016604">
    <property type="term" value="C:nuclear body"/>
    <property type="evidence" value="ECO:0000314"/>
    <property type="project" value="HPA"/>
</dbReference>
<dbReference type="GO" id="GO:0045335">
    <property type="term" value="C:phagocytic vesicle"/>
    <property type="evidence" value="ECO:0007669"/>
    <property type="project" value="Ensembl"/>
</dbReference>
<dbReference type="GO" id="GO:0000407">
    <property type="term" value="C:phagophore assembly site"/>
    <property type="evidence" value="ECO:0000318"/>
    <property type="project" value="GO_Central"/>
</dbReference>
<dbReference type="GO" id="GO:0035032">
    <property type="term" value="C:phosphatidylinositol 3-kinase complex, class III"/>
    <property type="evidence" value="ECO:0000353"/>
    <property type="project" value="ComplexPortal"/>
</dbReference>
<dbReference type="GO" id="GO:0034271">
    <property type="term" value="C:phosphatidylinositol 3-kinase complex, class III, type I"/>
    <property type="evidence" value="ECO:0000318"/>
    <property type="project" value="GO_Central"/>
</dbReference>
<dbReference type="GO" id="GO:0034272">
    <property type="term" value="C:phosphatidylinositol 3-kinase complex, class III, type II"/>
    <property type="evidence" value="ECO:0000318"/>
    <property type="project" value="GO_Central"/>
</dbReference>
<dbReference type="GO" id="GO:0005802">
    <property type="term" value="C:trans-Golgi network"/>
    <property type="evidence" value="ECO:0007669"/>
    <property type="project" value="Ensembl"/>
</dbReference>
<dbReference type="GO" id="GO:0051020">
    <property type="term" value="F:GTPase binding"/>
    <property type="evidence" value="ECO:0000353"/>
    <property type="project" value="UniProtKB"/>
</dbReference>
<dbReference type="GO" id="GO:0042802">
    <property type="term" value="F:identical protein binding"/>
    <property type="evidence" value="ECO:0007669"/>
    <property type="project" value="Ensembl"/>
</dbReference>
<dbReference type="GO" id="GO:0060090">
    <property type="term" value="F:molecular adaptor activity"/>
    <property type="evidence" value="ECO:0000314"/>
    <property type="project" value="UniProt"/>
</dbReference>
<dbReference type="GO" id="GO:0043548">
    <property type="term" value="F:phosphatidylinositol 3-kinase binding"/>
    <property type="evidence" value="ECO:0000353"/>
    <property type="project" value="ParkinsonsUK-UCL"/>
</dbReference>
<dbReference type="GO" id="GO:0019901">
    <property type="term" value="F:protein kinase binding"/>
    <property type="evidence" value="ECO:0000353"/>
    <property type="project" value="ARUK-UCL"/>
</dbReference>
<dbReference type="GO" id="GO:0030674">
    <property type="term" value="F:protein-macromolecule adaptor activity"/>
    <property type="evidence" value="ECO:0000314"/>
    <property type="project" value="UniProt"/>
</dbReference>
<dbReference type="GO" id="GO:0031625">
    <property type="term" value="F:ubiquitin protein ligase binding"/>
    <property type="evidence" value="ECO:0000353"/>
    <property type="project" value="UniProtKB"/>
</dbReference>
<dbReference type="GO" id="GO:0050435">
    <property type="term" value="P:amyloid-beta metabolic process"/>
    <property type="evidence" value="ECO:0007669"/>
    <property type="project" value="Ensembl"/>
</dbReference>
<dbReference type="GO" id="GO:0006915">
    <property type="term" value="P:apoptotic process"/>
    <property type="evidence" value="ECO:0007669"/>
    <property type="project" value="UniProtKB-KW"/>
</dbReference>
<dbReference type="GO" id="GO:0000045">
    <property type="term" value="P:autophagosome assembly"/>
    <property type="evidence" value="ECO:0000314"/>
    <property type="project" value="UniProt"/>
</dbReference>
<dbReference type="GO" id="GO:0097352">
    <property type="term" value="P:autophagosome maturation"/>
    <property type="evidence" value="ECO:0000314"/>
    <property type="project" value="ComplexPortal"/>
</dbReference>
<dbReference type="GO" id="GO:0006914">
    <property type="term" value="P:autophagy"/>
    <property type="evidence" value="ECO:0000314"/>
    <property type="project" value="CAFA"/>
</dbReference>
<dbReference type="GO" id="GO:0051301">
    <property type="term" value="P:cell division"/>
    <property type="evidence" value="ECO:0007669"/>
    <property type="project" value="UniProtKB-KW"/>
</dbReference>
<dbReference type="GO" id="GO:0006968">
    <property type="term" value="P:cellular defense response"/>
    <property type="evidence" value="ECO:0000304"/>
    <property type="project" value="ProtInc"/>
</dbReference>
<dbReference type="GO" id="GO:0071275">
    <property type="term" value="P:cellular response to aluminum ion"/>
    <property type="evidence" value="ECO:0007669"/>
    <property type="project" value="Ensembl"/>
</dbReference>
<dbReference type="GO" id="GO:0034198">
    <property type="term" value="P:cellular response to amino acid starvation"/>
    <property type="evidence" value="ECO:0007669"/>
    <property type="project" value="Ensembl"/>
</dbReference>
<dbReference type="GO" id="GO:0071280">
    <property type="term" value="P:cellular response to copper ion"/>
    <property type="evidence" value="ECO:0007669"/>
    <property type="project" value="Ensembl"/>
</dbReference>
<dbReference type="GO" id="GO:0071364">
    <property type="term" value="P:cellular response to epidermal growth factor stimulus"/>
    <property type="evidence" value="ECO:0007669"/>
    <property type="project" value="Ensembl"/>
</dbReference>
<dbReference type="GO" id="GO:0042149">
    <property type="term" value="P:cellular response to glucose starvation"/>
    <property type="evidence" value="ECO:0000250"/>
    <property type="project" value="UniProtKB"/>
</dbReference>
<dbReference type="GO" id="GO:0070301">
    <property type="term" value="P:cellular response to hydrogen peroxide"/>
    <property type="evidence" value="ECO:0007669"/>
    <property type="project" value="Ensembl"/>
</dbReference>
<dbReference type="GO" id="GO:0006995">
    <property type="term" value="P:cellular response to nitrogen starvation"/>
    <property type="evidence" value="ECO:0000318"/>
    <property type="project" value="GO_Central"/>
</dbReference>
<dbReference type="GO" id="GO:0090650">
    <property type="term" value="P:cellular response to oxygen-glucose deprivation"/>
    <property type="evidence" value="ECO:0007669"/>
    <property type="project" value="Ensembl"/>
</dbReference>
<dbReference type="GO" id="GO:0007623">
    <property type="term" value="P:circadian rhythm"/>
    <property type="evidence" value="ECO:0007669"/>
    <property type="project" value="Ensembl"/>
</dbReference>
<dbReference type="GO" id="GO:0002753">
    <property type="term" value="P:cytoplasmic pattern recognition receptor signaling pathway"/>
    <property type="evidence" value="ECO:0000314"/>
    <property type="project" value="UniProt"/>
</dbReference>
<dbReference type="GO" id="GO:0051607">
    <property type="term" value="P:defense response to virus"/>
    <property type="evidence" value="ECO:0007669"/>
    <property type="project" value="UniProtKB-KW"/>
</dbReference>
<dbReference type="GO" id="GO:0045022">
    <property type="term" value="P:early endosome to late endosome transport"/>
    <property type="evidence" value="ECO:0000314"/>
    <property type="project" value="ComplexPortal"/>
</dbReference>
<dbReference type="GO" id="GO:0043652">
    <property type="term" value="P:engulfment of apoptotic cell"/>
    <property type="evidence" value="ECO:0007669"/>
    <property type="project" value="Ensembl"/>
</dbReference>
<dbReference type="GO" id="GO:0007254">
    <property type="term" value="P:JNK cascade"/>
    <property type="evidence" value="ECO:0007669"/>
    <property type="project" value="Ensembl"/>
</dbReference>
<dbReference type="GO" id="GO:0045324">
    <property type="term" value="P:late endosome to vacuole transport"/>
    <property type="evidence" value="ECO:0000318"/>
    <property type="project" value="GO_Central"/>
</dbReference>
<dbReference type="GO" id="GO:0007040">
    <property type="term" value="P:lysosome organization"/>
    <property type="evidence" value="ECO:0007669"/>
    <property type="project" value="Ensembl"/>
</dbReference>
<dbReference type="GO" id="GO:0016236">
    <property type="term" value="P:macroautophagy"/>
    <property type="evidence" value="ECO:0000250"/>
    <property type="project" value="UniProtKB"/>
</dbReference>
<dbReference type="GO" id="GO:0000423">
    <property type="term" value="P:mitophagy"/>
    <property type="evidence" value="ECO:0000315"/>
    <property type="project" value="ParkinsonsUK-UCL"/>
</dbReference>
<dbReference type="GO" id="GO:0007080">
    <property type="term" value="P:mitotic metaphase chromosome alignment"/>
    <property type="evidence" value="ECO:0000315"/>
    <property type="project" value="CACAO"/>
</dbReference>
<dbReference type="GO" id="GO:0043066">
    <property type="term" value="P:negative regulation of apoptotic process"/>
    <property type="evidence" value="ECO:0000304"/>
    <property type="project" value="ProtInc"/>
</dbReference>
<dbReference type="GO" id="GO:1902902">
    <property type="term" value="P:negative regulation of autophagosome assembly"/>
    <property type="evidence" value="ECO:0007669"/>
    <property type="project" value="Ensembl"/>
</dbReference>
<dbReference type="GO" id="GO:0008285">
    <property type="term" value="P:negative regulation of cell population proliferation"/>
    <property type="evidence" value="ECO:0007669"/>
    <property type="project" value="Ensembl"/>
</dbReference>
<dbReference type="GO" id="GO:1905672">
    <property type="term" value="P:negative regulation of lysosome organization"/>
    <property type="evidence" value="ECO:0007669"/>
    <property type="project" value="Ensembl"/>
</dbReference>
<dbReference type="GO" id="GO:0043069">
    <property type="term" value="P:negative regulation of programmed cell death"/>
    <property type="evidence" value="ECO:0000315"/>
    <property type="project" value="MGI"/>
</dbReference>
<dbReference type="GO" id="GO:0048666">
    <property type="term" value="P:neuron development"/>
    <property type="evidence" value="ECO:0007669"/>
    <property type="project" value="Ensembl"/>
</dbReference>
<dbReference type="GO" id="GO:0038066">
    <property type="term" value="P:p38MAPK cascade"/>
    <property type="evidence" value="ECO:0007669"/>
    <property type="project" value="Ensembl"/>
</dbReference>
<dbReference type="GO" id="GO:0036092">
    <property type="term" value="P:phosphatidylinositol-3-phosphate biosynthetic process"/>
    <property type="evidence" value="ECO:0000314"/>
    <property type="project" value="ComplexPortal"/>
</dbReference>
<dbReference type="GO" id="GO:1902425">
    <property type="term" value="P:positive regulation of attachment of mitotic spindle microtubules to kinetochore"/>
    <property type="evidence" value="ECO:0000315"/>
    <property type="project" value="CACAO"/>
</dbReference>
<dbReference type="GO" id="GO:2000786">
    <property type="term" value="P:positive regulation of autophagosome assembly"/>
    <property type="evidence" value="ECO:0007669"/>
    <property type="project" value="Ensembl"/>
</dbReference>
<dbReference type="GO" id="GO:0010508">
    <property type="term" value="P:positive regulation of autophagy"/>
    <property type="evidence" value="ECO:0000314"/>
    <property type="project" value="UniProtKB"/>
</dbReference>
<dbReference type="GO" id="GO:0010613">
    <property type="term" value="P:positive regulation of cardiac muscle hypertrophy"/>
    <property type="evidence" value="ECO:0007669"/>
    <property type="project" value="Ensembl"/>
</dbReference>
<dbReference type="GO" id="GO:2001244">
    <property type="term" value="P:positive regulation of intrinsic apoptotic signaling pathway"/>
    <property type="evidence" value="ECO:0000315"/>
    <property type="project" value="UniProtKB"/>
</dbReference>
<dbReference type="GO" id="GO:0051897">
    <property type="term" value="P:positive regulation of phosphatidylinositol 3-kinase/protein kinase B signal transduction"/>
    <property type="evidence" value="ECO:0000303"/>
    <property type="project" value="ParkinsonsUK-UCL"/>
</dbReference>
<dbReference type="GO" id="GO:0062029">
    <property type="term" value="P:positive regulation of stress granule assembly"/>
    <property type="evidence" value="ECO:0007669"/>
    <property type="project" value="Ensembl"/>
</dbReference>
<dbReference type="GO" id="GO:0006622">
    <property type="term" value="P:protein targeting to lysosome"/>
    <property type="evidence" value="ECO:0000303"/>
    <property type="project" value="ComplexPortal"/>
</dbReference>
<dbReference type="GO" id="GO:0065003">
    <property type="term" value="P:protein-containing complex assembly"/>
    <property type="evidence" value="ECO:0000314"/>
    <property type="project" value="UniProt"/>
</dbReference>
<dbReference type="GO" id="GO:0032801">
    <property type="term" value="P:receptor catabolic process"/>
    <property type="evidence" value="ECO:0000315"/>
    <property type="project" value="UniProtKB"/>
</dbReference>
<dbReference type="GO" id="GO:0010506">
    <property type="term" value="P:regulation of autophagy"/>
    <property type="evidence" value="ECO:0000314"/>
    <property type="project" value="ComplexPortal"/>
</dbReference>
<dbReference type="GO" id="GO:0032465">
    <property type="term" value="P:regulation of cytokinesis"/>
    <property type="evidence" value="ECO:0000315"/>
    <property type="project" value="UniProtKB"/>
</dbReference>
<dbReference type="GO" id="GO:0016241">
    <property type="term" value="P:regulation of macroautophagy"/>
    <property type="evidence" value="ECO:0000314"/>
    <property type="project" value="ComplexPortal"/>
</dbReference>
<dbReference type="GO" id="GO:0001666">
    <property type="term" value="P:response to hypoxia"/>
    <property type="evidence" value="ECO:0007669"/>
    <property type="project" value="Ensembl"/>
</dbReference>
<dbReference type="GO" id="GO:0010040">
    <property type="term" value="P:response to iron(II) ion"/>
    <property type="evidence" value="ECO:0007669"/>
    <property type="project" value="Ensembl"/>
</dbReference>
<dbReference type="GO" id="GO:0010288">
    <property type="term" value="P:response to lead ion"/>
    <property type="evidence" value="ECO:0007669"/>
    <property type="project" value="Ensembl"/>
</dbReference>
<dbReference type="GO" id="GO:0098780">
    <property type="term" value="P:response to mitochondrial depolarisation"/>
    <property type="evidence" value="ECO:0000315"/>
    <property type="project" value="BHF-UCL"/>
</dbReference>
<dbReference type="GO" id="GO:0033197">
    <property type="term" value="P:response to vitamin E"/>
    <property type="evidence" value="ECO:0007669"/>
    <property type="project" value="Ensembl"/>
</dbReference>
<dbReference type="GO" id="GO:0009410">
    <property type="term" value="P:response to xenobiotic stimulus"/>
    <property type="evidence" value="ECO:0007669"/>
    <property type="project" value="Ensembl"/>
</dbReference>
<dbReference type="GO" id="GO:0060395">
    <property type="term" value="P:SMAD protein signal transduction"/>
    <property type="evidence" value="ECO:0007669"/>
    <property type="project" value="Ensembl"/>
</dbReference>
<dbReference type="DisProt" id="DP01149"/>
<dbReference type="FunFam" id="1.10.418.40:FF:000001">
    <property type="entry name" value="beclin-1 isoform X1"/>
    <property type="match status" value="1"/>
</dbReference>
<dbReference type="Gene3D" id="6.10.250.3110">
    <property type="match status" value="1"/>
</dbReference>
<dbReference type="Gene3D" id="1.10.418.40">
    <property type="entry name" value="Autophagy protein 6/Beclin 1"/>
    <property type="match status" value="1"/>
</dbReference>
<dbReference type="IDEAL" id="IID00669"/>
<dbReference type="InterPro" id="IPR007243">
    <property type="entry name" value="Atg6/Beclin"/>
</dbReference>
<dbReference type="InterPro" id="IPR038274">
    <property type="entry name" value="Atg6/Beclin_C_sf"/>
</dbReference>
<dbReference type="InterPro" id="IPR041691">
    <property type="entry name" value="Atg6/beclin_CC"/>
</dbReference>
<dbReference type="InterPro" id="IPR040455">
    <property type="entry name" value="Atg6_BARA"/>
</dbReference>
<dbReference type="InterPro" id="IPR029318">
    <property type="entry name" value="BH3_dom"/>
</dbReference>
<dbReference type="PANTHER" id="PTHR12768">
    <property type="entry name" value="BECLIN 1"/>
    <property type="match status" value="1"/>
</dbReference>
<dbReference type="PANTHER" id="PTHR12768:SF6">
    <property type="entry name" value="BECLIN-1"/>
    <property type="match status" value="1"/>
</dbReference>
<dbReference type="Pfam" id="PF04111">
    <property type="entry name" value="APG6"/>
    <property type="match status" value="1"/>
</dbReference>
<dbReference type="Pfam" id="PF17675">
    <property type="entry name" value="APG6_N"/>
    <property type="match status" value="1"/>
</dbReference>
<dbReference type="Pfam" id="PF15285">
    <property type="entry name" value="BH3"/>
    <property type="match status" value="1"/>
</dbReference>
<organism>
    <name type="scientific">Homo sapiens</name>
    <name type="common">Human</name>
    <dbReference type="NCBI Taxonomy" id="9606"/>
    <lineage>
        <taxon>Eukaryota</taxon>
        <taxon>Metazoa</taxon>
        <taxon>Chordata</taxon>
        <taxon>Craniata</taxon>
        <taxon>Vertebrata</taxon>
        <taxon>Euteleostomi</taxon>
        <taxon>Mammalia</taxon>
        <taxon>Eutheria</taxon>
        <taxon>Euarchontoglires</taxon>
        <taxon>Primates</taxon>
        <taxon>Haplorrhini</taxon>
        <taxon>Catarrhini</taxon>
        <taxon>Hominidae</taxon>
        <taxon>Homo</taxon>
    </lineage>
</organism>
<protein>
    <recommendedName>
        <fullName>Beclin-1</fullName>
    </recommendedName>
    <alternativeName>
        <fullName>Coiled-coil myosin-like BCL2-interacting protein</fullName>
    </alternativeName>
    <alternativeName>
        <fullName>Protein GT197</fullName>
    </alternativeName>
    <component>
        <recommendedName>
            <fullName evidence="56">Beclin-1-C 35 kDa</fullName>
        </recommendedName>
    </component>
    <component>
        <recommendedName>
            <fullName evidence="56">Beclin-1-C 37 kDa</fullName>
        </recommendedName>
    </component>
</protein>
<reference key="1">
    <citation type="journal article" date="1998" name="J. Virol.">
        <title>Protection against fatal Sindbis virus encephalitis by beclin, a novel Bcl-2-interacting protein.</title>
        <authorList>
            <person name="Liang X.H."/>
            <person name="Kleeman L.K."/>
            <person name="Jiang H.H."/>
            <person name="Gordon G."/>
            <person name="Goldman J.E."/>
            <person name="Berry G."/>
            <person name="Herman B."/>
            <person name="Levine B."/>
        </authorList>
    </citation>
    <scope>NUCLEOTIDE SEQUENCE [MRNA]</scope>
    <scope>FUNCTION</scope>
    <scope>FUNCTION (MICROBIAL INFECTION)</scope>
    <scope>INTERACTION WITH BCL-2</scope>
    <source>
        <tissue>Brain</tissue>
    </source>
</reference>
<reference key="2">
    <citation type="journal article" date="1999" name="Genomics">
        <title>Cloning and genomic organization of beclin 1, a candidate tumor suppressor gene on chromosome 17q21.</title>
        <authorList>
            <person name="Aita V.M."/>
            <person name="Liang X.H."/>
            <person name="Murty V.V.V.S."/>
            <person name="Pincus D.L."/>
            <person name="Yu W."/>
            <person name="Cayanis E."/>
            <person name="Kalachikov S."/>
            <person name="Gilliam T.C."/>
            <person name="Levine B."/>
        </authorList>
    </citation>
    <scope>NUCLEOTIDE SEQUENCE [MRNA]</scope>
</reference>
<reference key="3">
    <citation type="journal article" date="2004" name="Nat. Genet.">
        <title>Complete sequencing and characterization of 21,243 full-length human cDNAs.</title>
        <authorList>
            <person name="Ota T."/>
            <person name="Suzuki Y."/>
            <person name="Nishikawa T."/>
            <person name="Otsuki T."/>
            <person name="Sugiyama T."/>
            <person name="Irie R."/>
            <person name="Wakamatsu A."/>
            <person name="Hayashi K."/>
            <person name="Sato H."/>
            <person name="Nagai K."/>
            <person name="Kimura K."/>
            <person name="Makita H."/>
            <person name="Sekine M."/>
            <person name="Obayashi M."/>
            <person name="Nishi T."/>
            <person name="Shibahara T."/>
            <person name="Tanaka T."/>
            <person name="Ishii S."/>
            <person name="Yamamoto J."/>
            <person name="Saito K."/>
            <person name="Kawai Y."/>
            <person name="Isono Y."/>
            <person name="Nakamura Y."/>
            <person name="Nagahari K."/>
            <person name="Murakami K."/>
            <person name="Yasuda T."/>
            <person name="Iwayanagi T."/>
            <person name="Wagatsuma M."/>
            <person name="Shiratori A."/>
            <person name="Sudo H."/>
            <person name="Hosoiri T."/>
            <person name="Kaku Y."/>
            <person name="Kodaira H."/>
            <person name="Kondo H."/>
            <person name="Sugawara M."/>
            <person name="Takahashi M."/>
            <person name="Kanda K."/>
            <person name="Yokoi T."/>
            <person name="Furuya T."/>
            <person name="Kikkawa E."/>
            <person name="Omura Y."/>
            <person name="Abe K."/>
            <person name="Kamihara K."/>
            <person name="Katsuta N."/>
            <person name="Sato K."/>
            <person name="Tanikawa M."/>
            <person name="Yamazaki M."/>
            <person name="Ninomiya K."/>
            <person name="Ishibashi T."/>
            <person name="Yamashita H."/>
            <person name="Murakawa K."/>
            <person name="Fujimori K."/>
            <person name="Tanai H."/>
            <person name="Kimata M."/>
            <person name="Watanabe M."/>
            <person name="Hiraoka S."/>
            <person name="Chiba Y."/>
            <person name="Ishida S."/>
            <person name="Ono Y."/>
            <person name="Takiguchi S."/>
            <person name="Watanabe S."/>
            <person name="Yosida M."/>
            <person name="Hotuta T."/>
            <person name="Kusano J."/>
            <person name="Kanehori K."/>
            <person name="Takahashi-Fujii A."/>
            <person name="Hara H."/>
            <person name="Tanase T.-O."/>
            <person name="Nomura Y."/>
            <person name="Togiya S."/>
            <person name="Komai F."/>
            <person name="Hara R."/>
            <person name="Takeuchi K."/>
            <person name="Arita M."/>
            <person name="Imose N."/>
            <person name="Musashino K."/>
            <person name="Yuuki H."/>
            <person name="Oshima A."/>
            <person name="Sasaki N."/>
            <person name="Aotsuka S."/>
            <person name="Yoshikawa Y."/>
            <person name="Matsunawa H."/>
            <person name="Ichihara T."/>
            <person name="Shiohata N."/>
            <person name="Sano S."/>
            <person name="Moriya S."/>
            <person name="Momiyama H."/>
            <person name="Satoh N."/>
            <person name="Takami S."/>
            <person name="Terashima Y."/>
            <person name="Suzuki O."/>
            <person name="Nakagawa S."/>
            <person name="Senoh A."/>
            <person name="Mizoguchi H."/>
            <person name="Goto Y."/>
            <person name="Shimizu F."/>
            <person name="Wakebe H."/>
            <person name="Hishigaki H."/>
            <person name="Watanabe T."/>
            <person name="Sugiyama A."/>
            <person name="Takemoto M."/>
            <person name="Kawakami B."/>
            <person name="Yamazaki M."/>
            <person name="Watanabe K."/>
            <person name="Kumagai A."/>
            <person name="Itakura S."/>
            <person name="Fukuzumi Y."/>
            <person name="Fujimori Y."/>
            <person name="Komiyama M."/>
            <person name="Tashiro H."/>
            <person name="Tanigami A."/>
            <person name="Fujiwara T."/>
            <person name="Ono T."/>
            <person name="Yamada K."/>
            <person name="Fujii Y."/>
            <person name="Ozaki K."/>
            <person name="Hirao M."/>
            <person name="Ohmori Y."/>
            <person name="Kawabata A."/>
            <person name="Hikiji T."/>
            <person name="Kobatake N."/>
            <person name="Inagaki H."/>
            <person name="Ikema Y."/>
            <person name="Okamoto S."/>
            <person name="Okitani R."/>
            <person name="Kawakami T."/>
            <person name="Noguchi S."/>
            <person name="Itoh T."/>
            <person name="Shigeta K."/>
            <person name="Senba T."/>
            <person name="Matsumura K."/>
            <person name="Nakajima Y."/>
            <person name="Mizuno T."/>
            <person name="Morinaga M."/>
            <person name="Sasaki M."/>
            <person name="Togashi T."/>
            <person name="Oyama M."/>
            <person name="Hata H."/>
            <person name="Watanabe M."/>
            <person name="Komatsu T."/>
            <person name="Mizushima-Sugano J."/>
            <person name="Satoh T."/>
            <person name="Shirai Y."/>
            <person name="Takahashi Y."/>
            <person name="Nakagawa K."/>
            <person name="Okumura K."/>
            <person name="Nagase T."/>
            <person name="Nomura N."/>
            <person name="Kikuchi H."/>
            <person name="Masuho Y."/>
            <person name="Yamashita R."/>
            <person name="Nakai K."/>
            <person name="Yada T."/>
            <person name="Nakamura Y."/>
            <person name="Ohara O."/>
            <person name="Isogai T."/>
            <person name="Sugano S."/>
        </authorList>
    </citation>
    <scope>NUCLEOTIDE SEQUENCE [LARGE SCALE MRNA]</scope>
    <source>
        <tissue>Liver</tissue>
    </source>
</reference>
<reference key="4">
    <citation type="journal article" date="2004" name="Genome Res.">
        <title>The status, quality, and expansion of the NIH full-length cDNA project: the Mammalian Gene Collection (MGC).</title>
        <authorList>
            <consortium name="The MGC Project Team"/>
        </authorList>
    </citation>
    <scope>NUCLEOTIDE SEQUENCE [LARGE SCALE MRNA]</scope>
    <source>
        <tissue>Cervix</tissue>
    </source>
</reference>
<reference key="5">
    <citation type="journal article" date="1995" name="Genomics">
        <title>Generation of a transcription map at the HSD17B locus centromeric to BRCA1 at 17q21.</title>
        <authorList>
            <person name="Rommens J.M."/>
            <person name="Durocher F."/>
            <person name="McArthur J."/>
            <person name="Tonin P."/>
            <person name="Leblanc J.-F."/>
            <person name="Allen T."/>
            <person name="Samson C."/>
            <person name="Ferri L."/>
            <person name="Narod S."/>
            <person name="Morgan K."/>
            <person name="Simard J."/>
        </authorList>
    </citation>
    <scope>NUCLEOTIDE SEQUENCE [MRNA] OF 150-450</scope>
    <source>
        <tissue>Mammary gland</tissue>
    </source>
</reference>
<reference key="6">
    <citation type="journal article" date="2005" name="Cell">
        <title>Bcl-2 antiapoptotic proteins inhibit Beclin 1-dependent autophagy.</title>
        <authorList>
            <person name="Pattingre S."/>
            <person name="Tassa A."/>
            <person name="Qu X."/>
            <person name="Garuti R."/>
            <person name="Liang X.H."/>
            <person name="Mizushima N."/>
            <person name="Packer M."/>
            <person name="Schneider M.D."/>
            <person name="Levine B."/>
        </authorList>
    </citation>
    <scope>INTERACTION WITH BCL2</scope>
    <scope>MUTAGENESIS OF PHE-123</scope>
</reference>
<reference key="7">
    <citation type="journal article" date="2007" name="EMBO J.">
        <title>Functional and physical interaction between Bcl-X(L) and a BH3-like domain in Beclin-1.</title>
        <authorList>
            <person name="Maiuri M.C."/>
            <person name="Le Toumelin G."/>
            <person name="Criollo A."/>
            <person name="Rain J.C."/>
            <person name="Gautier F."/>
            <person name="Juin P."/>
            <person name="Tasdemir E."/>
            <person name="Pierron G."/>
            <person name="Troulinaki K."/>
            <person name="Tavernarakis N."/>
            <person name="Hickman J.A."/>
            <person name="Geneste O."/>
            <person name="Kroemer G."/>
        </authorList>
    </citation>
    <scope>INTERACTION WITH BCL2L1</scope>
    <scope>MUTAGENESIS OF LEU-116 AND PHE-123</scope>
</reference>
<reference key="8">
    <citation type="journal article" date="2007" name="Cell Host Microbe">
        <title>HSV-1 ICP34.5 confers neurovirulence by targeting the Beclin 1 autophagy protein.</title>
        <authorList>
            <person name="Orvedahl A."/>
            <person name="Alexander D."/>
            <person name="Talloczy Z."/>
            <person name="Sun Q."/>
            <person name="Wei Y."/>
            <person name="Zhang W."/>
            <person name="Burns D."/>
            <person name="Leib D.A."/>
            <person name="Levine B."/>
        </authorList>
    </citation>
    <scope>INTERACTION WITH HERPES SIMPLEX VIRUS 1 PROTEIN ICP34.5 (MICROBIAL INFECTION)</scope>
</reference>
<reference key="9">
    <citation type="journal article" date="2008" name="Mol. Biol. Cell">
        <title>Beclin 1 forms two distinct phosphatidylinositol 3-kinase complexes with mammalian Atg14 and UVRAG.</title>
        <authorList>
            <person name="Itakura E."/>
            <person name="Kishi C."/>
            <person name="Inoue K."/>
            <person name="Mizushima N."/>
        </authorList>
    </citation>
    <scope>INTERACTION WITH ATG14; PIK3C3; PIK3R4 AND UVRAG</scope>
</reference>
<reference key="10">
    <citation type="journal article" date="2008" name="Mol. Cell">
        <title>JNK1-mediated phosphorylation of Bcl-2 regulates starvation-induced autophagy.</title>
        <authorList>
            <person name="Wei Y."/>
            <person name="Pattingre S."/>
            <person name="Sinha S."/>
            <person name="Bassik M."/>
            <person name="Levine B."/>
        </authorList>
    </citation>
    <scope>FUNCTION</scope>
    <scope>INTERACTION WITH BCL2</scope>
</reference>
<reference key="11">
    <citation type="journal article" date="2008" name="Mol. Cell">
        <title>Kinase-selective enrichment enables quantitative phosphoproteomics of the kinome across the cell cycle.</title>
        <authorList>
            <person name="Daub H."/>
            <person name="Olsen J.V."/>
            <person name="Bairlein M."/>
            <person name="Gnad F."/>
            <person name="Oppermann F.S."/>
            <person name="Korner R."/>
            <person name="Greff Z."/>
            <person name="Keri G."/>
            <person name="Stemmann O."/>
            <person name="Mann M."/>
        </authorList>
    </citation>
    <scope>IDENTIFICATION BY MASS SPECTROMETRY [LARGE SCALE ANALYSIS]</scope>
    <source>
        <tissue>Cervix carcinoma</tissue>
    </source>
</reference>
<reference key="12">
    <citation type="journal article" date="2008" name="Oncogene">
        <title>Reduced expression of vacuole membrane protein 1 affects the invasion capacity of tumor cells.</title>
        <authorList>
            <person name="Sauermann M."/>
            <person name="Sahin O."/>
            <person name="Sultmann H."/>
            <person name="Hahne F."/>
            <person name="Blaszkiewicz S."/>
            <person name="Majety M."/>
            <person name="Zatloukal K."/>
            <person name="Fuzesi L."/>
            <person name="Poustka A."/>
            <person name="Wiemann S."/>
            <person name="Arlt D."/>
        </authorList>
    </citation>
    <scope>INTERACTION WITH VMP1</scope>
</reference>
<reference key="13">
    <citation type="journal article" date="2008" name="Proc. Natl. Acad. Sci. U.S.A.">
        <title>Identification of Barkor as a mammalian autophagy-specific factor for Beclin 1 and class III phosphatidylinositol 3-kinase.</title>
        <authorList>
            <person name="Sun Q."/>
            <person name="Fan W."/>
            <person name="Chen K."/>
            <person name="Ding X."/>
            <person name="Chen S."/>
            <person name="Zhong Q."/>
        </authorList>
    </citation>
    <scope>INTERACTION WITH ATG14; PIK3C3 AND UVRAG</scope>
    <scope>SUBCELLULAR LOCATION</scope>
</reference>
<reference key="14">
    <citation type="journal article" date="2009" name="EMBO Rep.">
        <title>DAP-kinase-mediated phosphorylation on the BH3 domain of beclin 1 promotes dissociation of beclin 1 from Bcl-XL and induction of autophagy.</title>
        <authorList>
            <person name="Zalckvar E."/>
            <person name="Berissi H."/>
            <person name="Mizrachy L."/>
            <person name="Idelchuk Y."/>
            <person name="Koren I."/>
            <person name="Eisenstein M."/>
            <person name="Sabanay H."/>
            <person name="Pinkas-Kramarski R."/>
            <person name="Kimchi A."/>
        </authorList>
    </citation>
    <scope>PHOSPHORYLATION AT THR-119</scope>
    <scope>INTERACTION WITH DAPK1</scope>
</reference>
<reference key="15">
    <citation type="journal article" date="2009" name="J. Virol.">
        <title>Interaction of ICP34.5 with Beclin 1 modulates herpes simplex virus type 1 pathogenesis through control of CD4+ T-cell responses.</title>
        <authorList>
            <person name="Leib D.A."/>
            <person name="Alexander D.E."/>
            <person name="Cox D."/>
            <person name="Yin J."/>
            <person name="Ferguson T.A."/>
        </authorList>
    </citation>
    <scope>INTERACTION WITH HERPES SIMPLEX VIRUS 1 PROTEIN ICP34.5 (MICROBIAL INFECTION)</scope>
</reference>
<reference key="16">
    <citation type="journal article" date="2009" name="Mol. Cell. Proteomics">
        <title>Large-scale proteomics analysis of the human kinome.</title>
        <authorList>
            <person name="Oppermann F.S."/>
            <person name="Gnad F."/>
            <person name="Olsen J.V."/>
            <person name="Hornberger R."/>
            <person name="Greff Z."/>
            <person name="Keri G."/>
            <person name="Mann M."/>
            <person name="Daub H."/>
        </authorList>
    </citation>
    <scope>IDENTIFICATION BY MASS SPECTROMETRY [LARGE SCALE ANALYSIS]</scope>
</reference>
<reference key="17">
    <citation type="journal article" date="2010" name="Exp. Cell Res.">
        <title>A phosphatidylinositol 3-kinase class III sub-complex containing VPS15, VPS34, Beclin 1, UVRAG and BIF-1 regulates cytokinesis and degradative endocytic traffic.</title>
        <authorList>
            <person name="Thoresen S.B."/>
            <person name="Pedersen N.M."/>
            <person name="Liestol K."/>
            <person name="Stenmark H."/>
        </authorList>
    </citation>
    <scope>FUNCTION</scope>
    <scope>SUBUNIT</scope>
</reference>
<reference key="18">
    <citation type="journal article" date="2009" name="Nat. Cell Biol.">
        <title>Two Beclin 1-binding proteins, Atg14L and Rubicon, reciprocally regulate autophagy at different stages.</title>
        <authorList>
            <person name="Matsunaga K."/>
            <person name="Saitoh T."/>
            <person name="Tabata K."/>
            <person name="Omori H."/>
            <person name="Satoh T."/>
            <person name="Kurotori N."/>
            <person name="Maejima I."/>
            <person name="Shirahama-Noda K."/>
            <person name="Ichimura T."/>
            <person name="Isobe T."/>
            <person name="Akira S."/>
            <person name="Noda T."/>
            <person name="Yoshimori T."/>
        </authorList>
    </citation>
    <scope>INTERACTION WITH ATG14; RUBCN; PIK3C3; PIK3R4 AND UVRAG</scope>
</reference>
<reference key="19">
    <citation type="journal article" date="2010" name="Cell Death Differ.">
        <title>Apoptosis blocks Beclin 1-dependent autophagosome synthesis: an effect rescued by Bcl-xL.</title>
        <authorList>
            <person name="Luo S."/>
            <person name="Rubinsztein D.C."/>
        </authorList>
    </citation>
    <scope>FUNCTION</scope>
    <scope>SUBCELLULAR LOCATION</scope>
    <scope>PROTEOLYTIC CLEAVAGE</scope>
    <scope>MUTAGENESIS OF ASP-149</scope>
</reference>
<reference key="20">
    <citation type="journal article" date="2010" name="Cell Death Dis.">
        <title>Caspase-mediated cleavage of Beclin-1 inactivates Beclin-1-induced autophagy and enhances apoptosis by promoting the release of proapoptotic factors from mitochondria.</title>
        <authorList>
            <person name="Wirawan E."/>
            <person name="Vande Walle L."/>
            <person name="Kersse K."/>
            <person name="Cornelis S."/>
            <person name="Claerhout S."/>
            <person name="Vanoverberghe I."/>
            <person name="Roelandt R."/>
            <person name="De Rycke R."/>
            <person name="Verspurten J."/>
            <person name="Declercq W."/>
            <person name="Agostinis P."/>
            <person name="Vanden Berghe T."/>
            <person name="Lippens S."/>
            <person name="Vandenabeele P."/>
        </authorList>
    </citation>
    <scope>FUNCTION</scope>
    <scope>PROTEOLYTIC CLEAVAGE</scope>
    <scope>SUBCELLULAR LOCATION</scope>
    <scope>MUTAGENESIS OF ASP-133 AND ASP-149</scope>
</reference>
<reference key="21">
    <citation type="journal article" date="2010" name="J. Cell Biol.">
        <title>Endogenous HMGB1 regulates autophagy.</title>
        <authorList>
            <person name="Tang D."/>
            <person name="Kang R."/>
            <person name="Livesey K.M."/>
            <person name="Cheh C.W."/>
            <person name="Farkas A."/>
            <person name="Loughran P."/>
            <person name="Hoppe G."/>
            <person name="Bianchi M.E."/>
            <person name="Tracey K.J."/>
            <person name="Zeh H.J. III"/>
            <person name="Lotze M.T."/>
        </authorList>
    </citation>
    <scope>INTERACTION WITH HMGB1</scope>
</reference>
<reference key="22">
    <citation type="journal article" date="2010" name="Nat. Cell Biol.">
        <title>PtdIns(3)P controls cytokinesis through KIF13A-mediated recruitment of FYVE-CENT to the midbody.</title>
        <authorList>
            <person name="Sagona A.P."/>
            <person name="Nezis I.P."/>
            <person name="Pedersen N.M."/>
            <person name="Liestol K."/>
            <person name="Poulton J."/>
            <person name="Rusten T.E."/>
            <person name="Skotheim R.I."/>
            <person name="Raiborg C."/>
            <person name="Stenmark H."/>
        </authorList>
    </citation>
    <scope>FUNCTION</scope>
</reference>
<reference key="23">
    <citation type="journal article" date="2011" name="Cancer Res.">
        <title>Following cytochrome c release, autophagy is inhibited during chemotherapy-induced apoptosis by caspase 8-mediated cleavage of Beclin 1.</title>
        <authorList>
            <person name="Li H."/>
            <person name="Wang P."/>
            <person name="Sun Q."/>
            <person name="Ding W.X."/>
            <person name="Yin X.M."/>
            <person name="Sobol R.W."/>
            <person name="Stolz D.B."/>
            <person name="Yu J."/>
            <person name="Zhang L."/>
        </authorList>
    </citation>
    <scope>PROTEOLYTIC CLEAVAGE</scope>
    <scope>MUTAGENESIS OF ASP-133 AND ASP-146</scope>
</reference>
<reference key="24">
    <citation type="journal article" date="2011" name="Cell">
        <title>Beclin1 controls the levels of p53 by regulating the deubiquitination activity of USP10 and USP13.</title>
        <authorList>
            <person name="Liu J."/>
            <person name="Xia H."/>
            <person name="Kim M."/>
            <person name="Xu L."/>
            <person name="Li Y."/>
            <person name="Zhang L."/>
            <person name="Cai Y."/>
            <person name="Norberg H.V."/>
            <person name="Zhang T."/>
            <person name="Furuya T."/>
            <person name="Jin M."/>
            <person name="Zhu Z."/>
            <person name="Wang H."/>
            <person name="Yu J."/>
            <person name="Li Y."/>
            <person name="Hao Y."/>
            <person name="Choi A."/>
            <person name="Ke H."/>
            <person name="Ma D."/>
            <person name="Yuan J."/>
        </authorList>
    </citation>
    <scope>UBIQUITINATION</scope>
    <scope>INTERACTION WITH USP10 AND USP13</scope>
</reference>
<reference key="25">
    <citation type="journal article" date="2011" name="EMBO J.">
        <title>Mitochondrial BCL-2 inhibits AMBRA1-induced autophagy.</title>
        <authorList>
            <person name="Strappazzon F."/>
            <person name="Vietri-Rudan M."/>
            <person name="Campello S."/>
            <person name="Nazio F."/>
            <person name="Florenzano F."/>
            <person name="Fimia G.M."/>
            <person name="Piacentini M."/>
            <person name="Levine B."/>
            <person name="Cecconi F."/>
        </authorList>
    </citation>
    <scope>FUNCTION</scope>
    <scope>INTERACTION WITH BCL2 AND AMBRA1</scope>
</reference>
<reference key="26">
    <citation type="journal article" date="2012" name="Autophagy">
        <title>The anti-apoptotic Bcl-B protein inhibits BECN1-dependent autophagic cell death.</title>
        <authorList>
            <person name="Robert G."/>
            <person name="Gastaldi C."/>
            <person name="Puissant A."/>
            <person name="Hamouda A."/>
            <person name="Jacquel A."/>
            <person name="Dufies M."/>
            <person name="Belhacene N."/>
            <person name="Colosetti P."/>
            <person name="Reed J.C."/>
            <person name="Auberger P."/>
            <person name="Luciano F."/>
        </authorList>
    </citation>
    <scope>INTERACTION WITH BCL2L10 AND BCL2L1</scope>
    <scope>SUBCELLULAR LOCATION</scope>
    <scope>MUTAGENESIS OF PHE-123</scope>
</reference>
<reference key="27">
    <citation type="journal article" date="2012" name="Biochem. J.">
        <title>Nedd4-dependent lysine-11-linked polyubiquitination of the tumour suppressor Beclin 1.</title>
        <authorList>
            <person name="Platta H.W."/>
            <person name="Abrahamsen H."/>
            <person name="Thoresen S.B."/>
            <person name="Stenmark H."/>
        </authorList>
    </citation>
    <scope>UBIQUITINATION BY NEDD4</scope>
    <scope>MUTAGENESIS OF TYR-352</scope>
</reference>
<reference key="28">
    <citation type="journal article" date="2012" name="J. Biol. Chem.">
        <title>Receptor signaling lymphocyte-activation molecule family 1 (Slamf1) regulates membrane fusion and NADPH oxidase 2 (NOX2) activity by recruiting a Beclin-1/Vps34/ultraviolet radiation resistance-associated gene (UVRAG) complex.</title>
        <authorList>
            <person name="Ma C."/>
            <person name="Wang N."/>
            <person name="Detre C."/>
            <person name="Wang G."/>
            <person name="O'Keeffe M."/>
            <person name="Terhorst C."/>
        </authorList>
    </citation>
    <scope>INTERACTION WITH SLAMF1</scope>
</reference>
<reference key="29">
    <citation type="journal article" date="2012" name="J. Virol.">
        <title>The human cytomegalovirus protein TRS1 inhibits autophagy via its interaction with Beclin 1.</title>
        <authorList>
            <person name="Chaumorcel M."/>
            <person name="Lussignol M."/>
            <person name="Mouna L."/>
            <person name="Cavignac Y."/>
            <person name="Fahie K."/>
            <person name="Cotte-Laffitte J."/>
            <person name="Geballe A."/>
            <person name="Brune W."/>
            <person name="Beau I."/>
            <person name="Codogno P."/>
            <person name="Esclatine A."/>
        </authorList>
    </citation>
    <scope>INTERACTION WITH HHV-5 PROTEIN TRS1 (MICROBIAL INFECTION)</scope>
</reference>
<reference key="30">
    <citation type="journal article" date="2012" name="Proc. Natl. Acad. Sci. U.S.A.">
        <title>N-terminal acetylome analyses and functional insights of the N-terminal acetyltransferase NatB.</title>
        <authorList>
            <person name="Van Damme P."/>
            <person name="Lasa M."/>
            <person name="Polevoda B."/>
            <person name="Gazquez C."/>
            <person name="Elosegui-Artola A."/>
            <person name="Kim D.S."/>
            <person name="De Juan-Pardo E."/>
            <person name="Demeyer K."/>
            <person name="Hole K."/>
            <person name="Larrea E."/>
            <person name="Timmerman E."/>
            <person name="Prieto J."/>
            <person name="Arnesen T."/>
            <person name="Sherman F."/>
            <person name="Gevaert K."/>
            <person name="Aldabe R."/>
        </authorList>
    </citation>
    <scope>ACETYLATION [LARGE SCALE ANALYSIS] AT MET-1</scope>
    <scope>IDENTIFICATION BY MASS SPECTROMETRY [LARGE SCALE ANALYSIS]</scope>
</reference>
<reference key="31">
    <citation type="journal article" date="2013" name="Biochem. J.">
        <title>Mitochondrion-associated protein LRPPRC suppresses the initiation of basal levels of autophagy via enhancing Bcl-2 stability.</title>
        <authorList>
            <person name="Zou J."/>
            <person name="Yue F."/>
            <person name="Jiang X."/>
            <person name="Li W."/>
            <person name="Yi J."/>
            <person name="Liu L."/>
        </authorList>
    </citation>
    <scope>IDENTIFICATION IN A COMPLEX WITH LPPRC AND BCL2</scope>
</reference>
<reference key="32">
    <citation type="journal article" date="2013" name="EMBO J.">
        <title>WASH inhibits autophagy through suppression of Beclin 1 ubiquitination.</title>
        <authorList>
            <person name="Xia P."/>
            <person name="Wang S."/>
            <person name="Du Y."/>
            <person name="Zhao Z."/>
            <person name="Shi L."/>
            <person name="Sun L."/>
            <person name="Huang G."/>
            <person name="Ye B."/>
            <person name="Li C."/>
            <person name="Dai Z."/>
            <person name="Hou N."/>
            <person name="Cheng X."/>
            <person name="Sun Q."/>
            <person name="Li L."/>
            <person name="Yang X."/>
            <person name="Fan Z."/>
        </authorList>
    </citation>
    <scope>FUNCTION</scope>
    <scope>INTERACTION WITH WASHC1</scope>
    <scope>UBIQUITINATION AT LYS-437</scope>
    <scope>MUTAGENESIS OF LYS-117 AND LYS-437</scope>
</reference>
<reference key="33">
    <citation type="journal article" date="2013" name="J. Biol. Chem.">
        <title>XBP1 mRNA splicing triggers an autophagic response in endothelial cells through BECLIN-1 transcriptional activation.</title>
        <authorList>
            <person name="Margariti A."/>
            <person name="Li H."/>
            <person name="Chen T."/>
            <person name="Martin D."/>
            <person name="Vizcay-Barrena G."/>
            <person name="Alam S."/>
            <person name="Karamariti E."/>
            <person name="Xiao Q."/>
            <person name="Zampetaki A."/>
            <person name="Zhang Z."/>
            <person name="Wang W."/>
            <person name="Jiang Z."/>
            <person name="Gao C."/>
            <person name="Ma B."/>
            <person name="Chen Y.G."/>
            <person name="Cockerill G."/>
            <person name="Hu Y."/>
            <person name="Xu Q."/>
            <person name="Zeng L."/>
        </authorList>
    </citation>
    <scope>FUNCTION</scope>
</reference>
<reference key="34">
    <citation type="journal article" date="2013" name="J. Proteome Res.">
        <title>Toward a comprehensive characterization of a human cancer cell phosphoproteome.</title>
        <authorList>
            <person name="Zhou H."/>
            <person name="Di Palma S."/>
            <person name="Preisinger C."/>
            <person name="Peng M."/>
            <person name="Polat A.N."/>
            <person name="Heck A.J."/>
            <person name="Mohammed S."/>
        </authorList>
    </citation>
    <scope>PHOSPHORYLATION [LARGE SCALE ANALYSIS] AT SER-30</scope>
    <scope>IDENTIFICATION BY MASS SPECTROMETRY [LARGE SCALE ANALYSIS]</scope>
    <source>
        <tissue>Erythroleukemia</tissue>
    </source>
</reference>
<reference key="35">
    <citation type="journal article" date="2013" name="Mol. Cell. Biol.">
        <title>Role of membrane association and Atg14-dependent phosphorylation in beclin-1-mediated autophagy.</title>
        <authorList>
            <person name="Fogel A.I."/>
            <person name="Dlouhy B.J."/>
            <person name="Wang C."/>
            <person name="Ryu S.W."/>
            <person name="Neutzner A."/>
            <person name="Hasson S.A."/>
            <person name="Sideris D.P."/>
            <person name="Abeliovich H."/>
            <person name="Youle R.J."/>
        </authorList>
    </citation>
    <scope>PHOSPHORYLATION AT SER-90 AND SER-93</scope>
    <scope>MUTAGENESIS OF SER-90; SER-93 AND TRP-425</scope>
    <scope>SUBCELLULAR LOCATION</scope>
    <scope>MEMBRANE-SPANNING REGION</scope>
    <scope>INTERACTION WITH PIK3C3; PIK3R4; UVRAG AND ATG14</scope>
</reference>
<reference key="36">
    <citation type="journal article" date="2013" name="PLoS ONE">
        <title>Rab39a interacts with phosphatidylinositol 3-kinase and negatively regulates autophagy induced by lipopolysaccharide stimulation in macrophages.</title>
        <authorList>
            <person name="Seto S."/>
            <person name="Sugaya K."/>
            <person name="Tsujimura K."/>
            <person name="Nagata T."/>
            <person name="Horii T."/>
            <person name="Koide Y."/>
        </authorList>
    </citation>
    <scope>INTERACTION WITH RAB39A</scope>
</reference>
<reference key="37">
    <citation type="journal article" date="2014" name="Dev. Cell">
        <title>TRIM proteins regulate autophagy and can target autophagic substrates by direct recognition.</title>
        <authorList>
            <person name="Mandell M.A."/>
            <person name="Jain A."/>
            <person name="Arko-Mensah J."/>
            <person name="Chauhan S."/>
            <person name="Kimura T."/>
            <person name="Dinkins C."/>
            <person name="Silvestri G."/>
            <person name="Munch J."/>
            <person name="Kirchhoff F."/>
            <person name="Simonsen A."/>
            <person name="Wei Y."/>
            <person name="Levine B."/>
            <person name="Johansen T."/>
            <person name="Deretic V."/>
        </authorList>
    </citation>
    <scope>INTERACTION WITH TRIM5</scope>
</reference>
<reference key="38">
    <citation type="journal article" date="2014" name="PLoS Genet.">
        <title>Beclin 1 is required for neuron viability and regulates endosome pathways via the UVRAG-VPS34 complex.</title>
        <authorList>
            <person name="McKnight N.C."/>
            <person name="Zhong Y."/>
            <person name="Wold M.S."/>
            <person name="Gong S."/>
            <person name="Phillips G.R."/>
            <person name="Dou Z."/>
            <person name="Zhao Y."/>
            <person name="Heintz N."/>
            <person name="Zong W.X."/>
            <person name="Yue Z."/>
        </authorList>
    </citation>
    <scope>FUNCTION</scope>
</reference>
<reference key="39">
    <citation type="journal article" date="2014" name="Autophagy">
        <title>Regulation of autophagy by E3 ubiquitin ligase RNF216 through BECN1 ubiquitination.</title>
        <authorList>
            <person name="Xu C."/>
            <person name="Feng K."/>
            <person name="Zhao X."/>
            <person name="Huang S."/>
            <person name="Cheng Y."/>
            <person name="Qian L."/>
            <person name="Wang Y."/>
            <person name="Sun H."/>
            <person name="Jin M."/>
            <person name="Chuang T.H."/>
            <person name="Zhang Y."/>
        </authorList>
    </citation>
    <scope>FUNCTION</scope>
    <scope>UBIQUITINATION BY RNF216</scope>
</reference>
<reference key="40">
    <citation type="journal article" date="2014" name="Elife">
        <title>Architecture and dynamics of the autophagic phosphatidylinositol 3-kinase complex.</title>
        <authorList>
            <person name="Baskaran S."/>
            <person name="Carlson L.A."/>
            <person name="Stjepanovic G."/>
            <person name="Young L.N."/>
            <person name="Kim do J."/>
            <person name="Grob P."/>
            <person name="Stanley R.E."/>
            <person name="Nogales E."/>
            <person name="Hurley J.H."/>
        </authorList>
    </citation>
    <scope>RECONSTITUTION OF THE PI3K COMPLEX I</scope>
    <scope>ELECTRON MICROSCOPY OF THE PI3K COMPLEX I</scope>
</reference>
<reference key="41">
    <citation type="journal article" date="2015" name="Cell Cycle">
        <title>AMBRA1 and BECLIN 1 interplay in the crosstalk between autophagy and cell proliferation.</title>
        <authorList>
            <person name="Cianfanelli V."/>
            <person name="D'Orazio M."/>
            <person name="Cecconi F."/>
        </authorList>
    </citation>
    <scope>INTERACTION WITH PPP2CA AND AMBRA1</scope>
</reference>
<reference key="42">
    <citation type="journal article" date="2015" name="Int. J. Mol. Sci.">
        <title>RNase L cleavage products promote switch from autophagy to apoptosis by caspase-mediated cleavage of beclin-1.</title>
        <authorList>
            <person name="Siddiqui M.A."/>
            <person name="Mukherjee S."/>
            <person name="Manivannan P."/>
            <person name="Malathi K."/>
        </authorList>
    </citation>
    <scope>FUNCTION</scope>
    <scope>SUBCELLULAR LOCATION</scope>
    <scope>MUTAGENESIS OF ASP-133 AND ASP-149</scope>
</reference>
<reference key="43">
    <citation type="journal article" date="2015" name="J. Cell Biol.">
        <title>TRIM-mediated precision autophagy targets cytoplasmic regulators of innate immunity.</title>
        <authorList>
            <person name="Kimura T."/>
            <person name="Jain A."/>
            <person name="Choi S.W."/>
            <person name="Mandell M.A."/>
            <person name="Schroder K."/>
            <person name="Johansen T."/>
            <person name="Deretic V."/>
        </authorList>
    </citation>
    <scope>INTERACTION WITH MEFV; TRIM21 AND ULK1</scope>
</reference>
<reference key="44">
    <citation type="journal article" date="2015" name="Mol. Cell">
        <title>IRGM governs the core autophagy machinery to conduct antimicrobial defense.</title>
        <authorList>
            <person name="Chauhan S."/>
            <person name="Mandell M.A."/>
            <person name="Deretic V."/>
        </authorList>
    </citation>
    <scope>INTERACTION WITH IRGM</scope>
    <scope>PHOSPHORYLATION AT SER-93 AND SER-96</scope>
</reference>
<reference key="45">
    <citation type="journal article" date="2016" name="Dev. Cell">
        <title>TRIMs and Galectins Globally Cooperate and TRIM16 and Galectin-3 Co-direct Autophagy in Endomembrane Damage Homeostasis.</title>
        <authorList>
            <person name="Chauhan S."/>
            <person name="Kumar S."/>
            <person name="Jain A."/>
            <person name="Ponpuak M."/>
            <person name="Mudd M.H."/>
            <person name="Kimura T."/>
            <person name="Choi S.W."/>
            <person name="Peters R."/>
            <person name="Mandell M."/>
            <person name="Bruun J.A."/>
            <person name="Johansen T."/>
            <person name="Deretic V."/>
        </authorList>
    </citation>
    <scope>INTERACTION WITH TRIM16</scope>
</reference>
<reference key="46">
    <citation type="journal article" date="2016" name="J. Cell Biol.">
        <title>Negative regulation of phosphatidylinositol 3-phosphate levels in early-to-late endosome conversion.</title>
        <authorList>
            <person name="Liu K."/>
            <person name="Jian Y."/>
            <person name="Sun X."/>
            <person name="Yang C."/>
            <person name="Gao Z."/>
            <person name="Zhang Z."/>
            <person name="Liu X."/>
            <person name="Li Y."/>
            <person name="Xu J."/>
            <person name="Jing Y."/>
            <person name="Mitani S."/>
            <person name="He S."/>
            <person name="Yang C."/>
        </authorList>
    </citation>
    <scope>FUNCTION</scope>
    <scope>INTERACTION WITH WDR81 AND WDR91</scope>
</reference>
<reference key="47">
    <citation type="journal article" date="2016" name="J. Cell Sci.">
        <title>TRIM17 contributes to autophagy of midbodies while actively sparing other targets from degradation.</title>
        <authorList>
            <person name="Mandell M.A."/>
            <person name="Jain A."/>
            <person name="Kumar S."/>
            <person name="Castleman M.J."/>
            <person name="Anwar T."/>
            <person name="Eskelinen E.L."/>
            <person name="Johansen T."/>
            <person name="Prekeris R."/>
            <person name="Deretic V."/>
        </authorList>
    </citation>
    <scope>INTERACTION WITH TRIM17</scope>
</reference>
<reference key="48">
    <citation type="journal article" date="2017" name="Gene">
        <title>Beclin1 antagonizes LAPTM4B-mediated EGFR overactivation in gastric cancer cells.</title>
        <authorList>
            <person name="Tian M."/>
            <person name="Chen Y."/>
            <person name="Tian D."/>
            <person name="Qiao X."/>
            <person name="Ma Z."/>
            <person name="Li J."/>
        </authorList>
    </citation>
    <scope>INTERACTION WITH LAPTM4B</scope>
</reference>
<reference key="49">
    <citation type="journal article" date="2017" name="Nature">
        <title>Polyglutamine tracts regulate beclin 1-dependent autophagy.</title>
        <authorList>
            <person name="Ashkenazi A."/>
            <person name="Bento C.F."/>
            <person name="Ricketts T."/>
            <person name="Vicinanza M."/>
            <person name="Siddiqi F."/>
            <person name="Pavel M."/>
            <person name="Squitieri F."/>
            <person name="Hardenberg M.C."/>
            <person name="Imarisio S."/>
            <person name="Menzies F.M."/>
            <person name="Rubinsztein D.C."/>
        </authorList>
    </citation>
    <scope>INTERACTION WITH ATXN3</scope>
    <scope>UBIQUITINATION AT LYS-402</scope>
    <scope>DEUBIQUITINATION BY ATXN3</scope>
    <scope>MUTAGENESIS OF LYS-402</scope>
    <scope>DOMAIN</scope>
    <scope>FUNCTION</scope>
</reference>
<reference key="50">
    <citation type="journal article" date="2018" name="Biochim. Biophys. Acta">
        <title>TRIM50 regulates Beclin 1 proautophagic activity.</title>
        <authorList>
            <person name="Fusco C."/>
            <person name="Mandriani B."/>
            <person name="Di Rienzo M."/>
            <person name="Micale L."/>
            <person name="Malerba N."/>
            <person name="Cocciadiferro D."/>
            <person name="Sjoettem E."/>
            <person name="Augello B."/>
            <person name="Squeo G.M."/>
            <person name="Pellico M.T."/>
            <person name="Jain A."/>
            <person name="Johansen T."/>
            <person name="Fimia G.M."/>
            <person name="Merla G."/>
        </authorList>
    </citation>
    <scope>INTERACTION WITH TRIM50</scope>
</reference>
<reference key="51">
    <citation type="journal article" date="2019" name="Mol. Cell">
        <title>The ER-Localized Transmembrane Protein TMEM39A/SUSR2 Regulates Autophagy by Controlling the Trafficking of the PtdIns(4)P Phosphatase SAC1.</title>
        <authorList>
            <person name="Miao G."/>
            <person name="Zhang Y."/>
            <person name="Chen D."/>
            <person name="Zhang H."/>
        </authorList>
    </citation>
    <scope>INTERACTION WITH ATG14</scope>
</reference>
<reference key="52">
    <citation type="journal article" date="2019" name="Sci. Adv.">
        <title>Autophagy induction in atrophic muscle cells requires ULK1 activation by TRIM32 through unanchored K63-linked polyubiquitin chains.</title>
        <authorList>
            <person name="Di Rienzo M."/>
            <person name="Antonioli M."/>
            <person name="Fusco C."/>
            <person name="Liu Y."/>
            <person name="Mari M."/>
            <person name="Orhon I."/>
            <person name="Refolo G."/>
            <person name="Germani F."/>
            <person name="Corazzari M."/>
            <person name="Romagnoli A."/>
            <person name="Ciccosanti F."/>
            <person name="Mandriani B."/>
            <person name="Pellico M.T."/>
            <person name="De La Torre R."/>
            <person name="Ding H."/>
            <person name="Dentice M."/>
            <person name="Neri M."/>
            <person name="Ferlini A."/>
            <person name="Reggiori F."/>
            <person name="Kulesz-Martin M."/>
            <person name="Piacentini M."/>
            <person name="Merla G."/>
            <person name="Fimia G.M."/>
        </authorList>
    </citation>
    <scope>PHOSPHORYLATION AT SER-15</scope>
</reference>
<reference evidence="57" key="53">
    <citation type="journal article" date="2020" name="Nat. Commun.">
        <title>A mosquito salivary protein promotes flavivirus transmission by activation of autophagy.</title>
        <authorList>
            <person name="Sun P."/>
            <person name="Nie K."/>
            <person name="Zhu Y."/>
            <person name="Liu Y."/>
            <person name="Wu P."/>
            <person name="Liu Z."/>
            <person name="Du S."/>
            <person name="Fan H."/>
            <person name="Chen C.H."/>
            <person name="Zhang R."/>
            <person name="Wang P."/>
            <person name="Cheng G."/>
        </authorList>
    </citation>
    <scope>INTERACTION WITH LRPPRC</scope>
</reference>
<reference key="54">
    <citation type="journal article" date="2021" name="Autophagy">
        <title>Adaptor SH3BGRL drives autophagy-mediated chemoresistance through promoting PIK3C3 translation and ATG12 stability in breast cancers.</title>
        <authorList>
            <person name="Zhang S."/>
            <person name="Liu X."/>
            <person name="Abdulmomen Ali Mohammed S."/>
            <person name="Li H."/>
            <person name="Cai W."/>
            <person name="Guan W."/>
            <person name="Liu D."/>
            <person name="Wei Y."/>
            <person name="Rong D."/>
            <person name="Fang Y."/>
            <person name="Haider F."/>
            <person name="Lv H."/>
            <person name="Jin Z."/>
            <person name="Chen X."/>
            <person name="Mo Z."/>
            <person name="Li L."/>
            <person name="Yang S."/>
            <person name="Wang H."/>
        </authorList>
    </citation>
    <scope>INTERACTION WITH SH3BGRL</scope>
</reference>
<reference key="55">
    <citation type="journal article" date="2023" name="Biochemistry">
        <title>Epstein-Barr Virus Encoded BCL2, BHRF1, Downregulates Autophagy by Noncanonical Binding of BECN1.</title>
        <authorList>
            <person name="Wyatt S."/>
            <person name="Glover K."/>
            <person name="Dasanna S."/>
            <person name="Lewison M."/>
            <person name="Gonzalez-Garcia M."/>
            <person name="Colbert C.L."/>
            <person name="Sinha S.C."/>
        </authorList>
    </citation>
    <scope>FUNCTION</scope>
    <scope>INTERACTION WITH EPSTEIN-BARR VIRUS PROTEIN BHRF1 (MICROBIAL INFECTION)</scope>
</reference>
<reference key="56">
    <citation type="journal article" date="2007" name="J. Biol. Chem.">
        <title>Crystal structure of the Bcl-XL-Beclin 1 peptide complex: Beclin 1 is a novel BH3-only protein.</title>
        <authorList>
            <person name="Oberstein A."/>
            <person name="Jeffrey P.D."/>
            <person name="Shi Y."/>
        </authorList>
    </citation>
    <scope>X-RAY CRYSTALLOGRAPHY (2.5 ANGSTROMS) OF 107-135 IN COMPLEX WITH BCL2L1</scope>
    <scope>DOMAIN BH3 MOTIF</scope>
</reference>
<reference key="57">
    <citation type="journal article" date="2007" name="J. Mol. Biol.">
        <title>Molecular basis of Bcl-xL's target recognition versatility revealed by the structure of Bcl-xL in complex with the BH3 domain of beclin-1.</title>
        <authorList>
            <person name="Feng W."/>
            <person name="Huang S."/>
            <person name="Wu H."/>
            <person name="Zhang M."/>
        </authorList>
    </citation>
    <scope>STRUCTURE BY NMR OF 106-128 IN COMPLEX WITH BCL2L1</scope>
</reference>
<reference key="58">
    <citation type="journal article" date="2008" name="Autophagy">
        <title>Molecular basis of the regulation of Beclin 1-dependent autophagy by the gamma-herpesvirus 68 Bcl-2 homolog M11.</title>
        <authorList>
            <person name="Sinha S."/>
            <person name="Colbert C.L."/>
            <person name="Becker N."/>
            <person name="Wei Y."/>
            <person name="Levine B."/>
        </authorList>
    </citation>
    <scope>X-RAY CRYSTALLOGRAPHY (2.5 ANGSTROMS) OF 105-130 IN COMPLEX WITH MUHV-4 M11 (MICROBIAL INFECTION)</scope>
    <scope>MUTAGENESIS OF LEU-112; LEU-116; GLY-120; ASP-121 AND PHE-123</scope>
</reference>
<reference key="59">
    <citation type="journal article" date="2014" name="J. Biol. Chem.">
        <title>Targeting gamma-herpesvirus 68 Bcl-2-mediated down-regulation of autophagy.</title>
        <authorList>
            <person name="Su M."/>
            <person name="Mei Y."/>
            <person name="Sanishvili R."/>
            <person name="Levine B."/>
            <person name="Colbert C.L."/>
            <person name="Sinha S."/>
        </authorList>
    </citation>
    <scope>X-RAY CRYSTALLOGRAPHY (2.1 ANGSTROMS) OF 107-130 IN COMPLEX WITH MUHV-4 M11 (MICROBIAL INFECTION)</scope>
    <scope>MUTAGENESIS OF LEU-112; LEU-116; LYS-117; GLY-120; ASP-121 AND PHE-123</scope>
</reference>
<name>BECN1_HUMAN</name>
<feature type="chain" id="PRO_0000218555" description="Beclin-1">
    <location>
        <begin position="1"/>
        <end position="450"/>
    </location>
</feature>
<feature type="chain" id="PRO_0000435036" description="Beclin-1-C 37 kDa" evidence="59">
    <location>
        <begin position="134"/>
        <end position="450"/>
    </location>
</feature>
<feature type="chain" id="PRO_0000435037" description="Beclin-1-C 35 kDa" evidence="59 60">
    <location>
        <begin position="150"/>
        <end position="450"/>
    </location>
</feature>
<feature type="region of interest" description="Disordered" evidence="4">
    <location>
        <begin position="48"/>
        <end position="72"/>
    </location>
</feature>
<feature type="region of interest" description="Interaction with BCL2 and BCL2L1 isoform Bcl-X(L)" evidence="7">
    <location>
        <begin position="112"/>
        <end position="159"/>
    </location>
</feature>
<feature type="region of interest" description="Evolutionary conserved domain (ECD)" evidence="61">
    <location>
        <begin position="245"/>
        <end position="450"/>
    </location>
</feature>
<feature type="region of interest" description="Required for membrane-association" evidence="32">
    <location>
        <begin position="425"/>
        <end position="450"/>
    </location>
</feature>
<feature type="coiled-coil region" evidence="3">
    <location>
        <begin position="142"/>
        <end position="270"/>
    </location>
</feature>
<feature type="short sequence motif" description="BH3" evidence="6">
    <location>
        <begin position="108"/>
        <end position="127"/>
    </location>
</feature>
<feature type="modified residue" description="N-acetylmethionine" evidence="62">
    <location>
        <position position="1"/>
    </location>
</feature>
<feature type="modified residue" description="Phosphoserine" evidence="50">
    <location>
        <position position="15"/>
    </location>
</feature>
<feature type="modified residue" description="Phosphoserine" evidence="63">
    <location>
        <position position="30"/>
    </location>
</feature>
<feature type="modified residue" description="Phosphoserine; by AMPK" evidence="32">
    <location>
        <position position="90"/>
    </location>
</feature>
<feature type="modified residue" description="Phosphoserine; by AMPK" evidence="32 41">
    <location>
        <position position="93"/>
    </location>
</feature>
<feature type="modified residue" description="Phosphoserine; by AMPK" evidence="41">
    <location>
        <position position="96"/>
    </location>
</feature>
<feature type="modified residue" description="Phosphothreonine; by DAPK1" evidence="15">
    <location>
        <position position="119"/>
    </location>
</feature>
<feature type="cross-link" description="Glycyl lysine isopeptide (Lys-Gly) (interchain with G-Cter in ubiquitin)" evidence="47">
    <location>
        <position position="402"/>
    </location>
</feature>
<feature type="cross-link" description="Glycyl lysine isopeptide (Lys-Gly) (interchain with G-Cter in ubiquitin)" evidence="33">
    <location>
        <position position="437"/>
    </location>
</feature>
<feature type="sequence variant" id="VAR_010384">
    <original>A</original>
    <variation>V</variation>
    <location>
        <position position="103"/>
    </location>
</feature>
<feature type="sequence variant" id="VAR_005236">
    <original>I</original>
    <variation>T</variation>
    <location>
        <position position="403"/>
    </location>
</feature>
<feature type="mutagenesis site" description="Complete loss of phosphorylation. Complete loss of phosphorylation and defective autophagic function; when associated with Ala-93." evidence="32">
    <original>S</original>
    <variation>A</variation>
    <location>
        <position position="90"/>
    </location>
</feature>
<feature type="mutagenesis site" description="Partial loss of phosphorylation. Complete loss of phosphorylation and defective autophagic function; when associated with Ala-90." evidence="32">
    <original>S</original>
    <variation>A</variation>
    <location>
        <position position="93"/>
    </location>
</feature>
<feature type="mutagenesis site" description="Weakly decreases interaction with MUHV-4 M11, greatly decreases interaction with BCL2L1 isoform Bcl-X(L)." evidence="12 35">
    <original>L</original>
    <variation>A</variation>
    <location>
        <position position="112"/>
    </location>
</feature>
<feature type="mutagenesis site" description="Decreases interaction with BCL2L1 isoform Bcl-X(L)." evidence="7 12 35">
    <original>L</original>
    <variation>A</variation>
    <location>
        <position position="116"/>
    </location>
</feature>
<feature type="mutagenesis site" description="Weakly decreases interaction with MUHV-4 M11, greatly decreases interaction with BCL2L1 isoform Bcl-X(L)." evidence="35">
    <original>K</original>
    <variation>A</variation>
    <location>
        <position position="117"/>
    </location>
</feature>
<feature type="mutagenesis site" description="Does not affect ubiquitination by the DCX(AMBRA1) complex." evidence="33">
    <original>K</original>
    <variation>R</variation>
    <location>
        <position position="117"/>
    </location>
</feature>
<feature type="mutagenesis site" description="Weakly decreases interaction with MUHV-4 M11, disrupts interaction with BCL2L1 isoform Bcl-X(L)." evidence="35">
    <original>GD</original>
    <variation>EA</variation>
    <location>
        <begin position="120"/>
        <end position="121"/>
    </location>
</feature>
<feature type="mutagenesis site" description="Decreases interaction with MUHV-4 M11, disrupts interaction with BCL2L1 isoform Bcl-X(L)." evidence="35">
    <original>G</original>
    <variation>E</variation>
    <location>
        <position position="120"/>
    </location>
</feature>
<feature type="mutagenesis site" description="No effect on interaction with MUHV-4 M11, disrupts interaction with BCL2L1 isoform Bcl-X(L)." evidence="35">
    <original>D</original>
    <variation>A</variation>
    <location>
        <position position="121"/>
    </location>
</feature>
<feature type="mutagenesis site" description="Weakly decreases interaction with MUHV-4 M11, disrupts interaction with BCL2 and decreases interaction with BCL2L1 isoform Bcl-X(L). Reduces interaction with BCL2L10." evidence="5 7 12 29 35">
    <original>F</original>
    <variation>A</variation>
    <location>
        <position position="123"/>
    </location>
</feature>
<feature type="mutagenesis site" description="Abolishes in vitro cleavage by CASP3 and CASP8; when associated with A-149." evidence="23">
    <original>D</original>
    <variation>A</variation>
    <location>
        <position position="133"/>
    </location>
</feature>
<feature type="mutagenesis site" description="Abolishes in vitro cleavage by CASP8; when associated with A-146." evidence="24">
    <original>D</original>
    <variation>A</variation>
    <location>
        <position position="133"/>
    </location>
</feature>
<feature type="mutagenesis site" description="Abolishes in vitro cleavage by CASP8; when associated with A-133." evidence="24">
    <original>D</original>
    <variation>A</variation>
    <location>
        <position position="146"/>
    </location>
</feature>
<feature type="mutagenesis site" description="Abolishes in vitro cleavage by CASP3 and CASP8; when associated with A-133." evidence="23">
    <original>D</original>
    <variation>A</variation>
    <location>
        <position position="149"/>
    </location>
</feature>
<feature type="mutagenesis site" description="Abolishes in vitro cleavage by CASP3." evidence="17">
    <original>D</original>
    <variation>E</variation>
    <location>
        <position position="149"/>
    </location>
</feature>
<feature type="mutagenesis site" description="Significantly reduces ubiquitination." evidence="25">
    <original>Y</original>
    <variation>A</variation>
    <location>
        <position position="352"/>
    </location>
</feature>
<feature type="mutagenesis site" description="Decreases K48 polyubiquitination and stabilizes BECN1." evidence="47">
    <original>K</original>
    <variation>R</variation>
    <location>
        <position position="402"/>
    </location>
</feature>
<feature type="mutagenesis site" description="Decrease in membrane-association." evidence="32">
    <original>W</original>
    <variation>A</variation>
    <location>
        <position position="425"/>
    </location>
</feature>
<feature type="mutagenesis site" description="Abolished ubiquitination by the DCX(AMBRA1) complex." evidence="33">
    <original>K</original>
    <variation>R</variation>
    <location>
        <position position="437"/>
    </location>
</feature>
<feature type="sequence conflict" description="In Ref. 5; AAB59573." evidence="57" ref="5">
    <original>T</original>
    <variation>A</variation>
    <location>
        <position position="150"/>
    </location>
</feature>
<feature type="sequence conflict" description="In Ref. 3; BAG35534." evidence="57" ref="3">
    <original>N</original>
    <variation>S</variation>
    <location>
        <position position="161"/>
    </location>
</feature>
<feature type="sequence conflict" description="In Ref. 3; BAG35534." evidence="57" ref="3">
    <original>L</original>
    <variation>H</variation>
    <location>
        <position position="314"/>
    </location>
</feature>
<feature type="helix" evidence="67">
    <location>
        <begin position="110"/>
        <end position="127"/>
    </location>
</feature>
<feature type="helix" evidence="65">
    <location>
        <begin position="160"/>
        <end position="169"/>
    </location>
</feature>
<feature type="helix" evidence="66">
    <location>
        <begin position="176"/>
        <end position="265"/>
    </location>
</feature>
<feature type="strand" evidence="64">
    <location>
        <begin position="276"/>
        <end position="279"/>
    </location>
</feature>
<feature type="strand" evidence="64">
    <location>
        <begin position="282"/>
        <end position="285"/>
    </location>
</feature>
<feature type="helix" evidence="64">
    <location>
        <begin position="300"/>
        <end position="321"/>
    </location>
</feature>
<feature type="strand" evidence="64">
    <location>
        <begin position="326"/>
        <end position="331"/>
    </location>
</feature>
<feature type="helix" evidence="64">
    <location>
        <begin position="334"/>
        <end position="336"/>
    </location>
</feature>
<feature type="strand" evidence="64">
    <location>
        <begin position="338"/>
        <end position="343"/>
    </location>
</feature>
<feature type="strand" evidence="64">
    <location>
        <begin position="349"/>
        <end position="351"/>
    </location>
</feature>
<feature type="helix" evidence="64">
    <location>
        <begin position="358"/>
        <end position="360"/>
    </location>
</feature>
<feature type="helix" evidence="64">
    <location>
        <begin position="364"/>
        <end position="384"/>
    </location>
</feature>
<feature type="turn" evidence="64">
    <location>
        <begin position="398"/>
        <end position="401"/>
    </location>
</feature>
<feature type="strand" evidence="64">
    <location>
        <begin position="402"/>
        <end position="404"/>
    </location>
</feature>
<feature type="turn" evidence="64">
    <location>
        <begin position="406"/>
        <end position="409"/>
    </location>
</feature>
<feature type="strand" evidence="64">
    <location>
        <begin position="412"/>
        <end position="415"/>
    </location>
</feature>
<feature type="helix" evidence="64">
    <location>
        <begin position="422"/>
        <end position="446"/>
    </location>
</feature>
<keyword id="KW-0002">3D-structure</keyword>
<keyword id="KW-0007">Acetylation</keyword>
<keyword id="KW-0051">Antiviral defense</keyword>
<keyword id="KW-0053">Apoptosis</keyword>
<keyword id="KW-0072">Autophagy</keyword>
<keyword id="KW-0131">Cell cycle</keyword>
<keyword id="KW-0132">Cell division</keyword>
<keyword id="KW-0175">Coiled coil</keyword>
<keyword id="KW-0963">Cytoplasm</keyword>
<keyword id="KW-0968">Cytoplasmic vesicle</keyword>
<keyword id="KW-0254">Endocytosis</keyword>
<keyword id="KW-0256">Endoplasmic reticulum</keyword>
<keyword id="KW-0967">Endosome</keyword>
<keyword id="KW-0333">Golgi apparatus</keyword>
<keyword id="KW-0945">Host-virus interaction</keyword>
<keyword id="KW-1017">Isopeptide bond</keyword>
<keyword id="KW-0472">Membrane</keyword>
<keyword id="KW-0496">Mitochondrion</keyword>
<keyword id="KW-0539">Nucleus</keyword>
<keyword id="KW-0597">Phosphoprotein</keyword>
<keyword id="KW-1267">Proteomics identification</keyword>
<keyword id="KW-1185">Reference proteome</keyword>
<keyword id="KW-0832">Ubl conjugation</keyword>
<proteinExistence type="evidence at protein level"/>
<comment type="function">
    <text evidence="11 19 20 22 30 33 37 38 44 47 54 55">Plays a central role in autophagy (PubMed:18570871, PubMed:21358617, PubMed:23184933, PubMed:23974797, PubMed:25484083, PubMed:28445460, PubMed:37776275). Acts as a core subunit of the PI3K complex that mediates formation of phosphatidylinositol 3-phosphate; different complex forms are believed to play a role in multiple membrane trafficking pathways: PI3KC3-C1 is involved in initiation of autophagosomes and PI3KC3-C2 in maturation of autophagosomes and endocytosis. Involved in regulation of degradative endocytic trafficking and required for the abscission step in cytokinesis, probably in the context of PI3KC3-C2 (PubMed:20208530, PubMed:20643123, PubMed:23974797, PubMed:26783301). Essential for the formation of PI3KC3-C2 but not PI3KC3-C1 PI3K complex forms. Involved in endocytosis (PubMed:25275521). May play a role in antiviral host defense.</text>
</comment>
<comment type="function">
    <text evidence="23 42">Beclin-1-C 35 kDa localized to mitochondria can promote apoptosis; it induces the mitochondrial translocation of BAX and the release of proapoptotic factors.</text>
</comment>
<comment type="function">
    <text evidence="55">(Microbial infection) Protects against infection by a neurovirulent strain of Sindbis virus.</text>
</comment>
<comment type="subunit">
    <text evidence="1 2 5 6 7 8 9 11 12 13 14 15 16 20 21 22 26 28 29 31 32 34 35 36 39 40 41 43 44 45 46 47 48 49 51 52 53 55 57">A homodimeric form is proposed to exist; this metastable form readily transits to ATG14- or UVRAG-containing complexes with BECN1:UVRAG being more stable than BECN1:ATG14 (By similarity). Component of the PI3K (PI3KC3/PI3K-III/class III phosphatidylinositol 3-kinase) complex the core of which is composed of the catalytic subunit PIK3C3, the regulatory subunit PIK3R4 and BECN1 associating with additional regulatory/auxiliary subunits to form alternative complex forms. Alternative complex forms containing a fourth regulatory subunit in a mutually exclusive manner are PI3K complex I (PI3KC3-C1) containing ATG14, and PI3K complex II (PI3KC3-C2) containing UVRAG. PI3KC3-C1 displays a V-shaped architecture with PIK3R4 serving as a bridge between PIK3C3 and the ATG14:BECN1 subcomplex (PubMed:18843052, PubMed:19050071, PubMed:19270696, PubMed:23878393, PubMed:25490155). Both, PI3KC3-C1 and PI3KC3-C2, can associate with further regulatory subunits, such as RUBCN, SH3GLB1/Bif-1 and AMBRA1 (PubMed:19270696, PubMed:20643123). PI3KC3-C1 probably associates with PIK3CB (By similarity). Forms a complex with PPP2CA and AMBRA1; AMBRA1 and BECN1 components of the complex regulate MYC stability via different pathways (PubMed:25803737). Component of the complex, at least composed of LRPPRC, BECN1 and BCL2; the interactions prevent BECN1 from forming an autophagy-inducing complex with PIK3C3 (PubMed:23822101). Interacts with AMBRA1, GOPC, GRID2 (PubMed:21358617). Interacts with BCL2 and BCL2L1 isoform Bcl-X(L); the interaction inhibits BECN1 function in promoting autophagy by interfering with the formation of the PI3K complex (PubMed:16179260, PubMed:17337444, PubMed:17446862, PubMed:17659302, PubMed:18570871, PubMed:21358617, PubMed:22498477, PubMed:9765397). Interacts with cytosolic HMGB1; inhibits the interaction of BECN1 and BCL2 leading to promotion of autophagy (PubMed:20819940). Interacts with USP10, USP13, VMP1, DAPK1, RAB39A (PubMed:17337444, PubMed:17724469, PubMed:19180116, PubMed:21962518, PubMed:24349490). Interacts with the poly-Gln domain of ATXN3; the interaction causes deubiquitination at Lys-402 and stabilizes BECN1 (PubMed:28445460). Interacts with SLAMF1 (PubMed:22493499). Interacts with TRIM5; the interaction causes activation of BECN1 by causing its dissociation from its inhibitors BCL2 and TAB2 (PubMed:25127057). Interacts with active ULK1 (phosphorylated on 'Ser-317') and MEFV simultaneously (PubMed:26347139). Interacts with WDR81 and WDR91; negatively regulates the PI3 kinase/PI3K activity associated with endosomal membranes (PubMed:26783301). Interacts with LAPTM4B; competes with EGFR for LAPTM4B binding; regulates EGFR activity (PubMed:28479384). Interacts with TRIM50 (PubMed:29604308). Interacts with TRIM16. Interacts with ATG14; this interaction is increased in the absence of TMEM39A (PubMed:31806350). Interacts with WASHC1; preventing interaction with AMBRA1 and the DCX(AMBRA1) complex and subsequent ubiquitination (PubMed:23974797). Interacts with TRIM17 (PubMed:27562068). Interacts with BCL2L10/BCL-B (via BH1 domain) (PubMed:22498477). Interacts with SH3BGRL (PubMed:34870550). Interacts with IRGM; enhancing BECN1-interacting partners and influencing the composition of the BECN1 complex (PubMed:25891078). Interacts with ARMC3 (By similarity). Interacts with LRPPRC (PubMed:31937766).</text>
</comment>
<comment type="subunit">
    <text evidence="27">(Microbial infection) Interacts with human cytomegalovirus/HHV-5 protein TRS1.</text>
</comment>
<comment type="subunit">
    <text evidence="12 35">(Microbial infection) Interacts with murine gammaherpesvirus 68 M11.</text>
</comment>
<comment type="subunit">
    <text evidence="10 18">(Microbial infection) Interacts with herpes simplex virus 1 (HHV-1) protein ICP34.5; this interaction antagonizes the host autophagy response.</text>
</comment>
<comment type="subunit">
    <text evidence="54">(Microbial infection) Interacts with Epstein-Barr virus protein BHRF1; this interaction inhibits BECN1-mediated autophagy induction.</text>
</comment>
<comment type="interaction">
    <interactant intactId="EBI-949378">
        <id>Q14457</id>
    </interactant>
    <interactant intactId="EBI-2512975">
        <id>Q9C0C7</id>
        <label>AMBRA1</label>
    </interactant>
    <organismsDiffer>false</organismsDiffer>
    <experiments>9</experiments>
</comment>
<comment type="interaction">
    <interactant intactId="EBI-949378">
        <id>Q14457</id>
    </interactant>
    <interactant intactId="EBI-2690371">
        <id>Q6ZNE5</id>
        <label>ATG14</label>
    </interactant>
    <organismsDiffer>false</organismsDiffer>
    <experiments>51</experiments>
</comment>
<comment type="interaction">
    <interactant intactId="EBI-949378">
        <id>Q14457</id>
    </interactant>
    <interactant intactId="EBI-930964">
        <id>P54253</id>
        <label>ATXN1</label>
    </interactant>
    <organismsDiffer>false</organismsDiffer>
    <experiments>6</experiments>
</comment>
<comment type="interaction">
    <interactant intactId="EBI-949378">
        <id>Q14457</id>
    </interactant>
    <interactant intactId="EBI-946068">
        <id>P54252-1</id>
        <label>ATXN3</label>
    </interactant>
    <organismsDiffer>false</organismsDiffer>
    <experiments>10</experiments>
</comment>
<comment type="interaction">
    <interactant intactId="EBI-949378">
        <id>Q14457</id>
    </interactant>
    <interactant intactId="EBI-10988864">
        <id>P46379-2</id>
        <label>BAG6</label>
    </interactant>
    <organismsDiffer>false</organismsDiffer>
    <experiments>3</experiments>
</comment>
<comment type="interaction">
    <interactant intactId="EBI-949378">
        <id>Q14457</id>
    </interactant>
    <interactant intactId="EBI-77694">
        <id>P10415</id>
        <label>BCL2</label>
    </interactant>
    <organismsDiffer>false</organismsDiffer>
    <experiments>18</experiments>
</comment>
<comment type="interaction">
    <interactant intactId="EBI-949378">
        <id>Q14457</id>
    </interactant>
    <interactant intactId="EBI-78035">
        <id>Q07817</id>
        <label>BCL2L1</label>
    </interactant>
    <organismsDiffer>false</organismsDiffer>
    <experiments>2</experiments>
</comment>
<comment type="interaction">
    <interactant intactId="EBI-949378">
        <id>Q14457</id>
    </interactant>
    <interactant intactId="EBI-287195">
        <id>Q07817-1</id>
        <label>BCL2L1</label>
    </interactant>
    <organismsDiffer>false</organismsDiffer>
    <experiments>5</experiments>
</comment>
<comment type="interaction">
    <interactant intactId="EBI-949378">
        <id>Q14457</id>
    </interactant>
    <interactant intactId="EBI-518823">
        <id>O15392</id>
        <label>BIRC5</label>
    </interactant>
    <organismsDiffer>false</organismsDiffer>
    <experiments>3</experiments>
</comment>
<comment type="interaction">
    <interactant intactId="EBI-949378">
        <id>Q14457</id>
    </interactant>
    <interactant intactId="EBI-25833510">
        <id>P38398-6</id>
        <label>BRCA1</label>
    </interactant>
    <organismsDiffer>false</organismsDiffer>
    <experiments>3</experiments>
</comment>
<comment type="interaction">
    <interactant intactId="EBI-949378">
        <id>Q14457</id>
    </interactant>
    <interactant intactId="EBI-355710">
        <id>P48643</id>
        <label>CCT5</label>
    </interactant>
    <organismsDiffer>false</organismsDiffer>
    <experiments>3</experiments>
</comment>
<comment type="interaction">
    <interactant intactId="EBI-949378">
        <id>Q14457</id>
    </interactant>
    <interactant intactId="EBI-21553822">
        <id>Q96A83-2</id>
        <label>COL26A1</label>
    </interactant>
    <organismsDiffer>false</organismsDiffer>
    <experiments>3</experiments>
</comment>
<comment type="interaction">
    <interactant intactId="EBI-949378">
        <id>Q14457</id>
    </interactant>
    <interactant intactId="EBI-358616">
        <id>P53355</id>
        <label>DAPK1</label>
    </interactant>
    <organismsDiffer>false</organismsDiffer>
    <experiments>4</experiments>
</comment>
<comment type="interaction">
    <interactant intactId="EBI-949378">
        <id>Q14457</id>
    </interactant>
    <interactant intactId="EBI-12593112">
        <id>O75190-2</id>
        <label>DNAJB6</label>
    </interactant>
    <organismsDiffer>false</organismsDiffer>
    <experiments>3</experiments>
</comment>
<comment type="interaction">
    <interactant intactId="EBI-949378">
        <id>Q14457</id>
    </interactant>
    <interactant intactId="EBI-395638">
        <id>O14645</id>
        <label>DNALI1</label>
    </interactant>
    <organismsDiffer>false</organismsDiffer>
    <experiments>3</experiments>
</comment>
<comment type="interaction">
    <interactant intactId="EBI-949378">
        <id>Q14457</id>
    </interactant>
    <interactant intactId="EBI-297353">
        <id>P00533</id>
        <label>EGFR</label>
    </interactant>
    <organismsDiffer>false</organismsDiffer>
    <experiments>7</experiments>
</comment>
<comment type="interaction">
    <interactant intactId="EBI-949378">
        <id>Q14457</id>
    </interactant>
    <interactant intactId="EBI-742102">
        <id>Q8IYI6</id>
        <label>EXOC8</label>
    </interactant>
    <organismsDiffer>false</organismsDiffer>
    <experiments>4</experiments>
</comment>
<comment type="interaction">
    <interactant intactId="EBI-949378">
        <id>Q14457</id>
    </interactant>
    <interactant intactId="EBI-1056902">
        <id>P15311</id>
        <label>EZR</label>
    </interactant>
    <organismsDiffer>false</organismsDiffer>
    <experiments>3</experiments>
</comment>
<comment type="interaction">
    <interactant intactId="EBI-949378">
        <id>Q14457</id>
    </interactant>
    <interactant intactId="EBI-9641086">
        <id>P21333-2</id>
        <label>FLNA</label>
    </interactant>
    <organismsDiffer>false</organismsDiffer>
    <experiments>3</experiments>
</comment>
<comment type="interaction">
    <interactant intactId="EBI-949378">
        <id>Q14457</id>
    </interactant>
    <interactant intactId="EBI-852851">
        <id>P01100</id>
        <label>FOS</label>
    </interactant>
    <organismsDiffer>false</organismsDiffer>
    <experiments>3</experiments>
</comment>
<comment type="interaction">
    <interactant intactId="EBI-949378">
        <id>Q14457</id>
    </interactant>
    <interactant intactId="EBI-2552594">
        <id>P50440</id>
        <label>GATM</label>
    </interactant>
    <organismsDiffer>false</organismsDiffer>
    <experiments>3</experiments>
</comment>
<comment type="interaction">
    <interactant intactId="EBI-949378">
        <id>Q14457</id>
    </interactant>
    <interactant intactId="EBI-401755">
        <id>P62993</id>
        <label>GRB2</label>
    </interactant>
    <organismsDiffer>false</organismsDiffer>
    <experiments>8</experiments>
</comment>
<comment type="interaction">
    <interactant intactId="EBI-949378">
        <id>Q14457</id>
    </interactant>
    <interactant intactId="EBI-6980805">
        <id>P42261</id>
        <label>GRIA1</label>
    </interactant>
    <organismsDiffer>false</organismsDiffer>
    <experiments>3</experiments>
</comment>
<comment type="interaction">
    <interactant intactId="EBI-949378">
        <id>Q14457</id>
    </interactant>
    <interactant intactId="EBI-747754">
        <id>P28799</id>
        <label>GRN</label>
    </interactant>
    <organismsDiffer>false</organismsDiffer>
    <experiments>3</experiments>
</comment>
<comment type="interaction">
    <interactant intactId="EBI-949378">
        <id>Q14457</id>
    </interactant>
    <interactant intactId="EBI-389432">
        <id>P09429</id>
        <label>HMGB1</label>
    </interactant>
    <organismsDiffer>false</organismsDiffer>
    <experiments>2</experiments>
</comment>
<comment type="interaction">
    <interactant intactId="EBI-949378">
        <id>Q14457</id>
    </interactant>
    <interactant intactId="EBI-352682">
        <id>P04792</id>
        <label>HSPB1</label>
    </interactant>
    <organismsDiffer>false</organismsDiffer>
    <experiments>3</experiments>
</comment>
<comment type="interaction">
    <interactant intactId="EBI-949378">
        <id>Q14457</id>
    </interactant>
    <interactant intactId="EBI-466029">
        <id>P42858</id>
        <label>HTT</label>
    </interactant>
    <organismsDiffer>false</organismsDiffer>
    <experiments>15</experiments>
</comment>
<comment type="interaction">
    <interactant intactId="EBI-949378">
        <id>Q14457</id>
    </interactant>
    <interactant intactId="EBI-10975473">
        <id>O60333-2</id>
        <label>KIF1B</label>
    </interactant>
    <organismsDiffer>false</organismsDiffer>
    <experiments>3</experiments>
</comment>
<comment type="interaction">
    <interactant intactId="EBI-949378">
        <id>Q14457</id>
    </interactant>
    <interactant intactId="EBI-948266">
        <id>O14901</id>
        <label>KLF11</label>
    </interactant>
    <organismsDiffer>false</organismsDiffer>
    <experiments>3</experiments>
</comment>
<comment type="interaction">
    <interactant intactId="EBI-949378">
        <id>Q14457</id>
    </interactant>
    <interactant intactId="EBI-297888">
        <id>P05783</id>
        <label>KRT18</label>
    </interactant>
    <organismsDiffer>false</organismsDiffer>
    <experiments>2</experiments>
</comment>
<comment type="interaction">
    <interactant intactId="EBI-949378">
        <id>Q14457</id>
    </interactant>
    <interactant intactId="EBI-4314821">
        <id>Q13449</id>
        <label>LSAMP</label>
    </interactant>
    <organismsDiffer>false</organismsDiffer>
    <experiments>3</experiments>
</comment>
<comment type="interaction">
    <interactant intactId="EBI-949378">
        <id>Q14457</id>
    </interactant>
    <interactant intactId="EBI-1003422">
        <id>Q07820</id>
        <label>MCL1</label>
    </interactant>
    <organismsDiffer>false</organismsDiffer>
    <experiments>2</experiments>
</comment>
<comment type="interaction">
    <interactant intactId="EBI-949378">
        <id>Q14457</id>
    </interactant>
    <interactant intactId="EBI-398874">
        <id>Q9UBU9</id>
        <label>NXF1</label>
    </interactant>
    <organismsDiffer>false</organismsDiffer>
    <experiments>3</experiments>
</comment>
<comment type="interaction">
    <interactant intactId="EBI-949378">
        <id>Q14457</id>
    </interactant>
    <interactant intactId="EBI-473160">
        <id>Q8N2W9</id>
        <label>PIAS4</label>
    </interactant>
    <organismsDiffer>false</organismsDiffer>
    <experiments>3</experiments>
</comment>
<comment type="interaction">
    <interactant intactId="EBI-949378">
        <id>Q14457</id>
    </interactant>
    <interactant intactId="EBI-1056470">
        <id>Q8NEB9</id>
        <label>PIK3C3</label>
    </interactant>
    <organismsDiffer>false</organismsDiffer>
    <experiments>43</experiments>
</comment>
<comment type="interaction">
    <interactant intactId="EBI-949378">
        <id>Q14457</id>
    </interactant>
    <interactant intactId="EBI-602382">
        <id>Q16512</id>
        <label>PKN1</label>
    </interactant>
    <organismsDiffer>false</organismsDiffer>
    <experiments>3</experiments>
</comment>
<comment type="interaction">
    <interactant intactId="EBI-949378">
        <id>Q14457</id>
    </interactant>
    <interactant intactId="EBI-749195">
        <id>P60891</id>
        <label>PRPS1</label>
    </interactant>
    <organismsDiffer>false</organismsDiffer>
    <experiments>3</experiments>
</comment>
<comment type="interaction">
    <interactant intactId="EBI-949378">
        <id>Q14457</id>
    </interactant>
    <interactant intactId="EBI-3048577">
        <id>Q14964</id>
        <label>RAB39A</label>
    </interactant>
    <organismsDiffer>false</organismsDiffer>
    <experiments>2</experiments>
</comment>
<comment type="interaction">
    <interactant intactId="EBI-949378">
        <id>Q14457</id>
    </interactant>
    <interactant intactId="EBI-413628">
        <id>P63000</id>
        <label>RAC1</label>
    </interactant>
    <organismsDiffer>false</organismsDiffer>
    <experiments>3</experiments>
</comment>
<comment type="interaction">
    <interactant intactId="EBI-949378">
        <id>Q14457</id>
    </interactant>
    <interactant intactId="EBI-10197061">
        <id>P10276-2</id>
        <label>RARA</label>
    </interactant>
    <organismsDiffer>false</organismsDiffer>
    <experiments>3</experiments>
</comment>
<comment type="interaction">
    <interactant intactId="EBI-949378">
        <id>Q14457</id>
    </interactant>
    <interactant intactId="EBI-396669">
        <id>Q9Y3C5</id>
        <label>RNF11</label>
    </interactant>
    <organismsDiffer>false</organismsDiffer>
    <experiments>3</experiments>
</comment>
<comment type="interaction">
    <interactant intactId="EBI-949378">
        <id>Q14457</id>
    </interactant>
    <interactant intactId="EBI-2952709">
        <id>Q92622</id>
        <label>RUBCN</label>
    </interactant>
    <organismsDiffer>false</organismsDiffer>
    <experiments>16</experiments>
</comment>
<comment type="interaction">
    <interactant intactId="EBI-949378">
        <id>Q14457</id>
    </interactant>
    <interactant intactId="EBI-9088146">
        <id>Q9H714-3</id>
        <label>RUBCNL</label>
    </interactant>
    <organismsDiffer>false</organismsDiffer>
    <experiments>3</experiments>
</comment>
<comment type="interaction">
    <interactant intactId="EBI-949378">
        <id>Q14457</id>
    </interactant>
    <interactant intactId="EBI-743117">
        <id>Q96ES7</id>
        <label>SGF29</label>
    </interactant>
    <organismsDiffer>false</organismsDiffer>
    <experiments>4</experiments>
</comment>
<comment type="interaction">
    <interactant intactId="EBI-949378">
        <id>Q14457</id>
    </interactant>
    <interactant intactId="EBI-372475">
        <id>P14678-2</id>
        <label>SNRPB</label>
    </interactant>
    <organismsDiffer>false</organismsDiffer>
    <experiments>3</experiments>
</comment>
<comment type="interaction">
    <interactant intactId="EBI-949378">
        <id>Q14457</id>
    </interactant>
    <interactant intactId="EBI-621482">
        <id>P12931</id>
        <label>SRC</label>
    </interactant>
    <organismsDiffer>false</organismsDiffer>
    <experiments>3</experiments>
</comment>
<comment type="interaction">
    <interactant intactId="EBI-949378">
        <id>Q14457</id>
    </interactant>
    <interactant intactId="EBI-358708">
        <id>Q9NYJ8</id>
        <label>TAB2</label>
    </interactant>
    <organismsDiffer>false</organismsDiffer>
    <experiments>11</experiments>
</comment>
<comment type="interaction">
    <interactant intactId="EBI-949378">
        <id>Q14457</id>
    </interactant>
    <interactant intactId="EBI-359964">
        <id>Q8N5C8</id>
        <label>TAB3</label>
    </interactant>
    <organismsDiffer>false</organismsDiffer>
    <experiments>9</experiments>
</comment>
<comment type="interaction">
    <interactant intactId="EBI-949378">
        <id>Q14457</id>
    </interactant>
    <interactant intactId="EBI-3956833">
        <id>P17752</id>
        <label>TPH1</label>
    </interactant>
    <organismsDiffer>false</organismsDiffer>
    <experiments>3</experiments>
</comment>
<comment type="interaction">
    <interactant intactId="EBI-949378">
        <id>Q14457</id>
    </interactant>
    <interactant intactId="EBI-711595">
        <id>Q13885</id>
        <label>TUBB2A</label>
    </interactant>
    <organismsDiffer>false</organismsDiffer>
    <experiments>3</experiments>
</comment>
<comment type="interaction">
    <interactant intactId="EBI-949378">
        <id>Q14457</id>
    </interactant>
    <interactant intactId="EBI-25894402">
        <id>P14679-2</id>
        <label>TYR</label>
    </interactant>
    <organismsDiffer>false</organismsDiffer>
    <experiments>3</experiments>
</comment>
<comment type="interaction">
    <interactant intactId="EBI-949378">
        <id>Q14457</id>
    </interactant>
    <interactant intactId="EBI-743128">
        <id>P14927</id>
        <label>UQCRB</label>
    </interactant>
    <organismsDiffer>false</organismsDiffer>
    <experiments>3</experiments>
</comment>
<comment type="interaction">
    <interactant intactId="EBI-949378">
        <id>Q14457</id>
    </interactant>
    <interactant intactId="EBI-1052596">
        <id>P31930</id>
        <label>UQCRC1</label>
    </interactant>
    <organismsDiffer>false</organismsDiffer>
    <experiments>3</experiments>
</comment>
<comment type="interaction">
    <interactant intactId="EBI-949378">
        <id>Q14457</id>
    </interactant>
    <interactant intactId="EBI-2952704">
        <id>Q9P2Y5</id>
        <label>UVRAG</label>
    </interactant>
    <organismsDiffer>false</organismsDiffer>
    <experiments>47</experiments>
</comment>
<comment type="interaction">
    <interactant intactId="EBI-949378">
        <id>Q14457</id>
    </interactant>
    <interactant intactId="EBI-357430">
        <id>P61758</id>
        <label>VBP1</label>
    </interactant>
    <organismsDiffer>false</organismsDiffer>
    <experiments>3</experiments>
</comment>
<comment type="interaction">
    <interactant intactId="EBI-949378">
        <id>Q14457</id>
    </interactant>
    <interactant intactId="EBI-353844">
        <id>P08670</id>
        <label>VIM</label>
    </interactant>
    <organismsDiffer>false</organismsDiffer>
    <experiments>3</experiments>
</comment>
<comment type="interaction">
    <interactant intactId="EBI-949378">
        <id>Q14457</id>
    </interactant>
    <interactant intactId="EBI-2800296">
        <id>Q96GC9</id>
        <label>VMP1</label>
    </interactant>
    <organismsDiffer>false</organismsDiffer>
    <experiments>3</experiments>
</comment>
<comment type="interaction">
    <interactant intactId="EBI-949378">
        <id>Q14457</id>
    </interactant>
    <interactant intactId="EBI-6160405">
        <id>A8K0Z3</id>
        <label>WASHC1</label>
    </interactant>
    <organismsDiffer>false</organismsDiffer>
    <experiments>3</experiments>
</comment>
<comment type="interaction">
    <interactant intactId="EBI-949378">
        <id>Q14457</id>
    </interactant>
    <interactant intactId="EBI-720609">
        <id>O76024</id>
        <label>WFS1</label>
    </interactant>
    <organismsDiffer>false</organismsDiffer>
    <experiments>3</experiments>
</comment>
<comment type="interaction">
    <interactant intactId="EBI-949378">
        <id>Q14457</id>
    </interactant>
    <interactant intactId="EBI-1001132">
        <id>O95229</id>
        <label>ZWINT</label>
    </interactant>
    <organismsDiffer>false</organismsDiffer>
    <experiments>6</experiments>
</comment>
<comment type="interaction">
    <interactant intactId="EBI-949378">
        <id>Q14457</id>
    </interactant>
    <interactant intactId="EBI-16025394">
        <id>Q2GJL5</id>
        <label>ats-1</label>
    </interactant>
    <organismsDiffer>true</organismsDiffer>
    <experiments>4</experiments>
</comment>
<comment type="interaction">
    <interactant intactId="EBI-949378">
        <id>Q14457</id>
    </interactant>
    <interactant intactId="EBI-7355020">
        <id>P03407</id>
        <label>nef</label>
    </interactant>
    <organismsDiffer>true</organismsDiffer>
    <experiments>2</experiments>
</comment>
<comment type="interaction">
    <interactant intactId="EBI-949378">
        <id>Q14457</id>
    </interactant>
    <interactant intactId="EBI-25622115">
        <id>PRO_0000283876</id>
        <label>rep</label>
        <dbReference type="UniProtKB" id="P0C6X5"/>
    </interactant>
    <organismsDiffer>true</organismsDiffer>
    <experiments>3</experiments>
</comment>
<comment type="interaction">
    <interactant intactId="EBI-949378">
        <id>Q14457</id>
    </interactant>
    <interactant intactId="EBI-7910086">
        <id>Q9QUM4</id>
        <label>Slamf1</label>
    </interactant>
    <organismsDiffer>true</organismsDiffer>
    <experiments>8</experiments>
</comment>
<comment type="interaction">
    <interactant intactId="EBI-949378">
        <id>Q14457</id>
    </interactant>
    <interactant intactId="EBI-8849581">
        <id>P89884</id>
        <label>vBCL2</label>
    </interactant>
    <organismsDiffer>true</organismsDiffer>
    <experiments>4</experiments>
</comment>
<comment type="interaction">
    <interactant intactId="EBI-949378">
        <id>Q14457</id>
    </interactant>
    <interactant intactId="EBI-11163586">
        <id>Q91ZQ0</id>
        <label>Vmp1</label>
    </interactant>
    <organismsDiffer>true</organismsDiffer>
    <experiments>6</experiments>
</comment>
<comment type="subcellular location">
    <subcellularLocation>
        <location evidence="17 23 29 38">Cytoplasm</location>
    </subcellularLocation>
    <subcellularLocation>
        <location evidence="14">Golgi apparatus</location>
        <location evidence="14">trans-Golgi network membrane</location>
        <topology evidence="14">Peripheral membrane protein</topology>
    </subcellularLocation>
    <subcellularLocation>
        <location evidence="32">Endosome membrane</location>
        <topology evidence="32">Peripheral membrane protein</topology>
    </subcellularLocation>
    <subcellularLocation>
        <location evidence="32">Endoplasmic reticulum membrane</location>
        <topology evidence="32">Peripheral membrane protein</topology>
    </subcellularLocation>
    <subcellularLocation>
        <location evidence="32">Mitochondrion membrane</location>
        <topology evidence="32">Peripheral membrane protein</topology>
    </subcellularLocation>
    <subcellularLocation>
        <location evidence="1">Endosome</location>
    </subcellularLocation>
    <subcellularLocation>
        <location evidence="57">Cytoplasmic vesicle</location>
        <location evidence="57">Autophagosome</location>
    </subcellularLocation>
    <text evidence="1 14">Interaction with ATG14 promotes translocation to autophagosomes. Expressed in dendrites and cell bodies of cerebellar Purkinje cells (By similarity).</text>
</comment>
<comment type="subcellular location">
    <molecule>Beclin-1-C 35 kDa</molecule>
    <subcellularLocation>
        <location evidence="23 42">Mitochondrion</location>
    </subcellularLocation>
    <subcellularLocation>
        <location evidence="17">Nucleus</location>
    </subcellularLocation>
    <subcellularLocation>
        <location evidence="17">Cytoplasm</location>
    </subcellularLocation>
</comment>
<comment type="subcellular location">
    <molecule>Beclin-1-C 37 kDa</molecule>
    <subcellularLocation>
        <location evidence="1">Mitochondrion</location>
    </subcellularLocation>
</comment>
<comment type="tissue specificity">
    <text>Ubiquitous.</text>
</comment>
<comment type="domain">
    <text evidence="2">The coiled coil domain can form antiparallel homodimers and mediates dimerization with the coiled coil domains of ATG14 or UVRAG involved in the formation of PI3K complexes.</text>
</comment>
<comment type="domain">
    <text evidence="47">The C-terminal evolutionary conserved domain (ECD) contains poly-Gln-binding domains such as the ATXN3 poly-Gln motif, consistent with structural docking models revealing two highly scored poly-Gln-binding pockets in the ECD (PubMed:28445460). As some binding is observed with BECN1 lacking the ECD, other domains of BECN1 may also interact with ATXN3 (PubMed:28445460).</text>
</comment>
<comment type="PTM">
    <text evidence="15 32 41">Phosphorylation at Thr-119 by DAPK1 reduces its interaction with BCL2 and BCL2L1 and promotes induction of autophagy (PubMed:19180116). In response to autophagic stimuli, phosphorylated at serine residues by AMPK in an ATG14-dependent manner, and this phosphorylation is critical for maximally efficient autophagy (PubMed:23878393, PubMed:25891078).</text>
</comment>
<comment type="PTM">
    <text evidence="25 26 33 38 47">Polyubiquitinated by NEDD4, both with 'Lys-11'- and 'Lys-63'-linkages (PubMed:21936852). 'Lys-11'-linked polyubiquitination leads to degradation and is enhanced when the stabilizing interaction partner VPS34 is depleted (PubMed:21936852). Deubiquitinated by USP10 and USP13, leading to stabilize the PIK3C3/VPS34-containing complexes (PubMed:21962518). Polyubiquitinated at Lys-402 with 'Lys-48'-linkages (PubMed:28445460). 'Lys-48'-linked polyubiquitination of Lys-402 leads to degradation (PubMed:28445460). Deubiquitinated by ATXN3, leading to stabilization (PubMed:28445460). Ubiquitinated at Lys-437 via 'Lys-63'-linkage by the DCX(AMBRA1) complex, thereby increasing the association between BECN1 and PIK3C3 to promote PIK3C3 activity (PubMed:23974797). 'Lys-48'-linked ubiquitination by RNF216 leads to proteasomal degradation and autophagy inhibition (PubMed:25484083).</text>
</comment>
<comment type="PTM">
    <text evidence="58 59">Proteolytically processed by caspases including CASP8 and CASP3; the C-terminal fragments lack autophagy-inducing capacity and are proposed to induce apoptosis. Thus the cleavage is proposed to be an determinant to switch from autophagy to apoptosis pathways affecting cellular homeostasis including viral infections and survival of tumor cells.</text>
</comment>
<comment type="miscellaneous">
    <text evidence="47">Expanded poly-Gln tracts inhibit ATXN3-BECN1 interaction, decrease BECN1 levels and impair starvation-induced autophagy (PubMed:28445460).</text>
</comment>
<comment type="similarity">
    <text evidence="57">Belongs to the beclin family.</text>
</comment>
<sequence length="450" mass="51896">MEGSKTSNNSTMQVSFVCQRCSQPLKLDTSFKILDRVTIQELTAPLLTTAQAKPGETQEEETNSGEEPFIETPRQDGVSRRFIPPARMMSTESANSFTLIGEASDGGTMENLSRRLKVTGDLFDIMSGQTDVDHPLCEECTDTLLDQLDTQLNVTENECQNYKRCLEILEQMNEDDSEQLQMELKELALEEERLIQELEDVEKNRKIVAENLEKVQAEAERLDQEEAQYQREYSEFKRQQLELDDELKSVENQMRYAQTQLDKLKKTNVFNATFHIWHSGQFGTINNFRLGRLPSVPVEWNEINAAWGQTVLLLHALANKMGLKFQRYRLVPYGNHSYLESLTDKSKELPLYCSGGLRFFWDNKFDHAMVAFLDCVQQFKEEVEKGETRFCLPYRMDVEKGKIEDTGGSGGSYSIKTQFNSEEQWTKALKFMLTNLKWGLAWVSSQFYNK</sequence>
<evidence type="ECO:0000250" key="1">
    <source>
        <dbReference type="UniProtKB" id="O88597"/>
    </source>
</evidence>
<evidence type="ECO:0000250" key="2">
    <source>
        <dbReference type="UniProtKB" id="Q91XJ1"/>
    </source>
</evidence>
<evidence type="ECO:0000255" key="3"/>
<evidence type="ECO:0000256" key="4">
    <source>
        <dbReference type="SAM" id="MobiDB-lite"/>
    </source>
</evidence>
<evidence type="ECO:0000269" key="5">
    <source>
    </source>
</evidence>
<evidence type="ECO:0000269" key="6">
    <source>
    </source>
</evidence>
<evidence type="ECO:0000269" key="7">
    <source>
    </source>
</evidence>
<evidence type="ECO:0000269" key="8">
    <source>
    </source>
</evidence>
<evidence type="ECO:0000269" key="9">
    <source>
    </source>
</evidence>
<evidence type="ECO:0000269" key="10">
    <source>
    </source>
</evidence>
<evidence type="ECO:0000269" key="11">
    <source>
    </source>
</evidence>
<evidence type="ECO:0000269" key="12">
    <source>
    </source>
</evidence>
<evidence type="ECO:0000269" key="13">
    <source>
    </source>
</evidence>
<evidence type="ECO:0000269" key="14">
    <source>
    </source>
</evidence>
<evidence type="ECO:0000269" key="15">
    <source>
    </source>
</evidence>
<evidence type="ECO:0000269" key="16">
    <source>
    </source>
</evidence>
<evidence type="ECO:0000269" key="17">
    <source>
    </source>
</evidence>
<evidence type="ECO:0000269" key="18">
    <source>
    </source>
</evidence>
<evidence type="ECO:0000269" key="19">
    <source>
    </source>
</evidence>
<evidence type="ECO:0000269" key="20">
    <source>
    </source>
</evidence>
<evidence type="ECO:0000269" key="21">
    <source>
    </source>
</evidence>
<evidence type="ECO:0000269" key="22">
    <source>
    </source>
</evidence>
<evidence type="ECO:0000269" key="23">
    <source>
    </source>
</evidence>
<evidence type="ECO:0000269" key="24">
    <source>
    </source>
</evidence>
<evidence type="ECO:0000269" key="25">
    <source>
    </source>
</evidence>
<evidence type="ECO:0000269" key="26">
    <source>
    </source>
</evidence>
<evidence type="ECO:0000269" key="27">
    <source>
    </source>
</evidence>
<evidence type="ECO:0000269" key="28">
    <source>
    </source>
</evidence>
<evidence type="ECO:0000269" key="29">
    <source>
    </source>
</evidence>
<evidence type="ECO:0000269" key="30">
    <source>
    </source>
</evidence>
<evidence type="ECO:0000269" key="31">
    <source>
    </source>
</evidence>
<evidence type="ECO:0000269" key="32">
    <source>
    </source>
</evidence>
<evidence type="ECO:0000269" key="33">
    <source>
    </source>
</evidence>
<evidence type="ECO:0000269" key="34">
    <source>
    </source>
</evidence>
<evidence type="ECO:0000269" key="35">
    <source>
    </source>
</evidence>
<evidence type="ECO:0000269" key="36">
    <source>
    </source>
</evidence>
<evidence type="ECO:0000269" key="37">
    <source>
    </source>
</evidence>
<evidence type="ECO:0000269" key="38">
    <source>
    </source>
</evidence>
<evidence type="ECO:0000269" key="39">
    <source>
    </source>
</evidence>
<evidence type="ECO:0000269" key="40">
    <source>
    </source>
</evidence>
<evidence type="ECO:0000269" key="41">
    <source>
    </source>
</evidence>
<evidence type="ECO:0000269" key="42">
    <source>
    </source>
</evidence>
<evidence type="ECO:0000269" key="43">
    <source>
    </source>
</evidence>
<evidence type="ECO:0000269" key="44">
    <source>
    </source>
</evidence>
<evidence type="ECO:0000269" key="45">
    <source>
    </source>
</evidence>
<evidence type="ECO:0000269" key="46">
    <source>
    </source>
</evidence>
<evidence type="ECO:0000269" key="47">
    <source>
    </source>
</evidence>
<evidence type="ECO:0000269" key="48">
    <source>
    </source>
</evidence>
<evidence type="ECO:0000269" key="49">
    <source>
    </source>
</evidence>
<evidence type="ECO:0000269" key="50">
    <source>
    </source>
</evidence>
<evidence type="ECO:0000269" key="51">
    <source>
    </source>
</evidence>
<evidence type="ECO:0000269" key="52">
    <source>
    </source>
</evidence>
<evidence type="ECO:0000269" key="53">
    <source>
    </source>
</evidence>
<evidence type="ECO:0000269" key="54">
    <source>
    </source>
</evidence>
<evidence type="ECO:0000269" key="55">
    <source>
    </source>
</evidence>
<evidence type="ECO:0000303" key="56">
    <source>
    </source>
</evidence>
<evidence type="ECO:0000305" key="57"/>
<evidence type="ECO:0000305" key="58">
    <source>
    </source>
</evidence>
<evidence type="ECO:0000305" key="59">
    <source>
    </source>
</evidence>
<evidence type="ECO:0000305" key="60">
    <source>
    </source>
</evidence>
<evidence type="ECO:0000305" key="61">
    <source>
    </source>
</evidence>
<evidence type="ECO:0007744" key="62">
    <source>
    </source>
</evidence>
<evidence type="ECO:0007744" key="63">
    <source>
    </source>
</evidence>
<evidence type="ECO:0007829" key="64">
    <source>
        <dbReference type="PDB" id="4DDP"/>
    </source>
</evidence>
<evidence type="ECO:0007829" key="65">
    <source>
        <dbReference type="PDB" id="5EFM"/>
    </source>
</evidence>
<evidence type="ECO:0007829" key="66">
    <source>
        <dbReference type="PDB" id="5HHE"/>
    </source>
</evidence>
<evidence type="ECO:0007829" key="67">
    <source>
        <dbReference type="PDB" id="5VAU"/>
    </source>
</evidence>
<accession>Q14457</accession>
<accession>B2R6N7</accession>
<accession>O75595</accession>
<accession>Q9UNA8</accession>
<gene>
    <name type="primary">BECN1</name>
    <name type="synonym">GT197</name>
</gene>